<feature type="signal peptide" evidence="4">
    <location>
        <begin position="1"/>
        <end position="25"/>
    </location>
</feature>
<feature type="chain" id="PRO_0000017322" description="Low-density lipoprotein receptor-related protein 2">
    <location>
        <begin position="26"/>
        <end position="4660"/>
    </location>
</feature>
<feature type="topological domain" description="Extracellular" evidence="4">
    <location>
        <begin position="26"/>
        <end position="4425"/>
    </location>
</feature>
<feature type="transmembrane region" description="Helical" evidence="4">
    <location>
        <begin position="4426"/>
        <end position="4446"/>
    </location>
</feature>
<feature type="topological domain" description="Cytoplasmic" evidence="4">
    <location>
        <begin position="4447"/>
        <end position="4660"/>
    </location>
</feature>
<feature type="domain" description="LDL-receptor class A 1" evidence="6">
    <location>
        <begin position="27"/>
        <end position="63"/>
    </location>
</feature>
<feature type="domain" description="LDL-receptor class A 2" evidence="6">
    <location>
        <begin position="66"/>
        <end position="104"/>
    </location>
</feature>
<feature type="domain" description="LDL-receptor class A 3" evidence="6">
    <location>
        <begin position="107"/>
        <end position="143"/>
    </location>
</feature>
<feature type="domain" description="LDL-receptor class A 4" evidence="6">
    <location>
        <begin position="141"/>
        <end position="180"/>
    </location>
</feature>
<feature type="domain" description="LDL-receptor class A 5" evidence="6">
    <location>
        <begin position="182"/>
        <end position="218"/>
    </location>
</feature>
<feature type="domain" description="LDL-receptor class A 6" evidence="6">
    <location>
        <begin position="221"/>
        <end position="257"/>
    </location>
</feature>
<feature type="domain" description="LDL-receptor class A 7" evidence="6">
    <location>
        <begin position="264"/>
        <end position="307"/>
    </location>
</feature>
<feature type="domain" description="EGF-like 1; calcium-binding" evidence="5">
    <location>
        <begin position="347"/>
        <end position="382"/>
    </location>
</feature>
<feature type="repeat" description="LDL-receptor class B 1" evidence="7">
    <location>
        <begin position="435"/>
        <end position="477"/>
    </location>
</feature>
<feature type="repeat" description="LDL-receptor class B 2" evidence="7">
    <location>
        <begin position="478"/>
        <end position="520"/>
    </location>
</feature>
<feature type="repeat" description="LDL-receptor class B 3" evidence="7">
    <location>
        <begin position="521"/>
        <end position="567"/>
    </location>
</feature>
<feature type="repeat" description="LDL-receptor class B 4" evidence="7">
    <location>
        <begin position="568"/>
        <end position="612"/>
    </location>
</feature>
<feature type="repeat" description="LDL-receptor class B 5" evidence="7">
    <location>
        <begin position="752"/>
        <end position="794"/>
    </location>
</feature>
<feature type="repeat" description="LDL-receptor class B 6" evidence="7">
    <location>
        <begin position="795"/>
        <end position="836"/>
    </location>
</feature>
<feature type="repeat" description="LDL-receptor class B 7" evidence="7">
    <location>
        <begin position="837"/>
        <end position="880"/>
    </location>
</feature>
<feature type="repeat" description="LDL-receptor class B 8" evidence="7">
    <location>
        <begin position="881"/>
        <end position="924"/>
    </location>
</feature>
<feature type="domain" description="LDL-receptor class A 8" evidence="6">
    <location>
        <begin position="1024"/>
        <end position="1060"/>
    </location>
</feature>
<feature type="domain" description="LDL-receptor class A 9" evidence="6">
    <location>
        <begin position="1065"/>
        <end position="1102"/>
    </location>
</feature>
<feature type="domain" description="LDL-receptor class A 10" evidence="6">
    <location>
        <begin position="1109"/>
        <end position="1145"/>
    </location>
</feature>
<feature type="domain" description="LDL-receptor class A 11" evidence="6">
    <location>
        <begin position="1149"/>
        <end position="1185"/>
    </location>
</feature>
<feature type="domain" description="LDL-receptor class A 12" evidence="6">
    <location>
        <begin position="1187"/>
        <end position="1224"/>
    </location>
</feature>
<feature type="domain" description="LDL-receptor class A 13" evidence="6">
    <location>
        <begin position="1230"/>
        <end position="1268"/>
    </location>
</feature>
<feature type="domain" description="LDL-receptor class A 14" evidence="6">
    <location>
        <begin position="1271"/>
        <end position="1307"/>
    </location>
</feature>
<feature type="domain" description="LDL-receptor class A 15" evidence="6">
    <location>
        <begin position="1312"/>
        <end position="1350"/>
    </location>
</feature>
<feature type="domain" description="EGF-like 2" evidence="5">
    <location>
        <begin position="1350"/>
        <end position="1390"/>
    </location>
</feature>
<feature type="domain" description="EGF-like 3; calcium-binding" evidence="5">
    <location>
        <begin position="1391"/>
        <end position="1430"/>
    </location>
</feature>
<feature type="repeat" description="LDL-receptor class B 9" evidence="7">
    <location>
        <begin position="1479"/>
        <end position="1521"/>
    </location>
</feature>
<feature type="repeat" description="LDL-receptor class B 10" evidence="7">
    <location>
        <begin position="1522"/>
        <end position="1564"/>
    </location>
</feature>
<feature type="repeat" description="LDL-receptor class B 11" evidence="7">
    <location>
        <begin position="1567"/>
        <end position="1610"/>
    </location>
</feature>
<feature type="repeat" description="LDL-receptor class B 12" evidence="7">
    <location>
        <begin position="1611"/>
        <end position="1655"/>
    </location>
</feature>
<feature type="repeat" description="LDL-receptor class B 13" evidence="7">
    <location>
        <begin position="1656"/>
        <end position="1696"/>
    </location>
</feature>
<feature type="repeat" description="LDL-receptor class B 14" evidence="7">
    <location>
        <begin position="1791"/>
        <end position="1833"/>
    </location>
</feature>
<feature type="repeat" description="LDL-receptor class B 15" evidence="7">
    <location>
        <begin position="1834"/>
        <end position="1883"/>
    </location>
</feature>
<feature type="repeat" description="LDL-receptor class B 16" evidence="7">
    <location>
        <begin position="1884"/>
        <end position="1931"/>
    </location>
</feature>
<feature type="repeat" description="LDL-receptor class B 17" evidence="7">
    <location>
        <begin position="1932"/>
        <end position="1973"/>
    </location>
</feature>
<feature type="repeat" description="LDL-receptor class B 18" evidence="7">
    <location>
        <begin position="1974"/>
        <end position="2014"/>
    </location>
</feature>
<feature type="repeat" description="LDL-receptor class B 19" evidence="7">
    <location>
        <begin position="2108"/>
        <end position="2157"/>
    </location>
</feature>
<feature type="repeat" description="LDL-receptor class B 20" evidence="7">
    <location>
        <begin position="2158"/>
        <end position="2202"/>
    </location>
</feature>
<feature type="repeat" description="LDL-receptor class B 21" evidence="7">
    <location>
        <begin position="2203"/>
        <end position="2246"/>
    </location>
</feature>
<feature type="repeat" description="LDL-receptor class B 22" evidence="7">
    <location>
        <begin position="2247"/>
        <end position="2290"/>
    </location>
</feature>
<feature type="repeat" description="LDL-receptor class B 23" evidence="7">
    <location>
        <begin position="2432"/>
        <end position="2478"/>
    </location>
</feature>
<feature type="repeat" description="LDL-receptor class B 24" evidence="7">
    <location>
        <begin position="2479"/>
        <end position="2519"/>
    </location>
</feature>
<feature type="repeat" description="LDL-receptor class B 25" evidence="7">
    <location>
        <begin position="2520"/>
        <end position="2563"/>
    </location>
</feature>
<feature type="repeat" description="LDL-receptor class B 26" evidence="7">
    <location>
        <begin position="2564"/>
        <end position="2605"/>
    </location>
</feature>
<feature type="repeat" description="LDL-receptor class B 27" evidence="7">
    <location>
        <begin position="2606"/>
        <end position="2647"/>
    </location>
</feature>
<feature type="domain" description="LDL-receptor class A 16" evidence="6">
    <location>
        <begin position="2700"/>
        <end position="2738"/>
    </location>
</feature>
<feature type="domain" description="LDL-receptor class A 17" evidence="6">
    <location>
        <begin position="2741"/>
        <end position="2777"/>
    </location>
</feature>
<feature type="domain" description="LDL-receptor class A 18" evidence="6">
    <location>
        <begin position="2780"/>
        <end position="2819"/>
    </location>
</feature>
<feature type="domain" description="LDL-receptor class A 19" evidence="6">
    <location>
        <begin position="2822"/>
        <end position="2861"/>
    </location>
</feature>
<feature type="domain" description="LDL-receptor class A 20" evidence="6">
    <location>
        <begin position="2864"/>
        <end position="2902"/>
    </location>
</feature>
<feature type="domain" description="LDL-receptor class A 21" evidence="6">
    <location>
        <begin position="2907"/>
        <end position="2946"/>
    </location>
</feature>
<feature type="domain" description="LDL-receptor class A 22" evidence="6">
    <location>
        <begin position="2949"/>
        <end position="2991"/>
    </location>
</feature>
<feature type="domain" description="LDL-receptor class A 23" evidence="6">
    <location>
        <begin position="2994"/>
        <end position="3030"/>
    </location>
</feature>
<feature type="domain" description="LDL-receptor class A 24" evidence="6">
    <location>
        <begin position="3033"/>
        <end position="3071"/>
    </location>
</feature>
<feature type="domain" description="LDL-receptor class A 25" evidence="6">
    <location>
        <begin position="3076"/>
        <end position="3112"/>
    </location>
</feature>
<feature type="domain" description="EGF-like 4" evidence="5">
    <location>
        <begin position="3112"/>
        <end position="3153"/>
    </location>
</feature>
<feature type="domain" description="EGF-like 5; calcium-binding" evidence="5">
    <location>
        <begin position="3154"/>
        <end position="3194"/>
    </location>
</feature>
<feature type="repeat" description="LDL-receptor class B 28" evidence="7">
    <location>
        <begin position="3241"/>
        <end position="3283"/>
    </location>
</feature>
<feature type="repeat" description="LDL-receptor class B 29" evidence="7">
    <location>
        <begin position="3284"/>
        <end position="3326"/>
    </location>
</feature>
<feature type="repeat" description="LDL-receptor class B 30" evidence="7">
    <location>
        <begin position="3335"/>
        <end position="3378"/>
    </location>
</feature>
<feature type="repeat" description="LDL-receptor class B 31" evidence="7">
    <location>
        <begin position="3379"/>
        <end position="3421"/>
    </location>
</feature>
<feature type="repeat" description="LDL-receptor class B 32" evidence="7">
    <location>
        <begin position="3422"/>
        <end position="3462"/>
    </location>
</feature>
<feature type="domain" description="LDL-receptor class A 26" evidence="6">
    <location>
        <begin position="3513"/>
        <end position="3551"/>
    </location>
</feature>
<feature type="domain" description="LDL-receptor class A 27" evidence="6">
    <location>
        <begin position="3554"/>
        <end position="3592"/>
    </location>
</feature>
<feature type="domain" description="LDL-receptor class A 28" evidence="6">
    <location>
        <begin position="3595"/>
        <end position="3633"/>
    </location>
</feature>
<feature type="domain" description="LDL-receptor class A 29" evidence="6">
    <location>
        <begin position="3636"/>
        <end position="3674"/>
    </location>
</feature>
<feature type="domain" description="LDL-receptor class A 30" evidence="6">
    <location>
        <begin position="3679"/>
        <end position="3717"/>
    </location>
</feature>
<feature type="domain" description="LDL-receptor class A 31" evidence="6">
    <location>
        <begin position="3720"/>
        <end position="3757"/>
    </location>
</feature>
<feature type="domain" description="LDL-receptor class A 32" evidence="6">
    <location>
        <begin position="3760"/>
        <end position="3796"/>
    </location>
</feature>
<feature type="domain" description="LDL-receptor class A 33" evidence="6">
    <location>
        <begin position="3799"/>
        <end position="3835"/>
    </location>
</feature>
<feature type="domain" description="LDL-receptor class A 34" evidence="6">
    <location>
        <begin position="3843"/>
        <end position="3881"/>
    </location>
</feature>
<feature type="domain" description="LDL-receptor class A 35" evidence="6">
    <location>
        <begin position="3884"/>
        <end position="3923"/>
    </location>
</feature>
<feature type="domain" description="LDL-receptor class A 36" evidence="6">
    <location>
        <begin position="3929"/>
        <end position="3965"/>
    </location>
</feature>
<feature type="domain" description="EGF-like 6" evidence="5">
    <location>
        <begin position="3968"/>
        <end position="4003"/>
    </location>
</feature>
<feature type="domain" description="EGF-like 7; calcium-binding" evidence="5">
    <location>
        <begin position="4009"/>
        <end position="4050"/>
    </location>
</feature>
<feature type="repeat" description="LDL-receptor class B 33" evidence="7">
    <location>
        <begin position="4156"/>
        <end position="4198"/>
    </location>
</feature>
<feature type="repeat" description="LDL-receptor class B 34" evidence="7">
    <location>
        <begin position="4199"/>
        <end position="4242"/>
    </location>
</feature>
<feature type="repeat" description="LDL-receptor class B 35" evidence="7">
    <location>
        <begin position="4244"/>
        <end position="4285"/>
    </location>
</feature>
<feature type="domain" description="EGF-like 8" evidence="5">
    <location>
        <begin position="4379"/>
        <end position="4413"/>
    </location>
</feature>
<feature type="region of interest" description="Disordered" evidence="8">
    <location>
        <begin position="4559"/>
        <end position="4582"/>
    </location>
</feature>
<feature type="region of interest" description="Interaction with DAB2" evidence="3">
    <location>
        <begin position="4597"/>
        <end position="4610"/>
    </location>
</feature>
<feature type="region of interest" description="Disordered" evidence="8">
    <location>
        <begin position="4617"/>
        <end position="4660"/>
    </location>
</feature>
<feature type="short sequence motif" description="SH3-binding" evidence="4">
    <location>
        <begin position="4454"/>
        <end position="4463"/>
    </location>
</feature>
<feature type="short sequence motif" description="PxLPxI/L motif 1; mediates interaction with ANKRA2" evidence="26">
    <location>
        <begin position="4457"/>
        <end position="4462"/>
    </location>
</feature>
<feature type="short sequence motif" description="PxLPxI/L motif 2; mediates interaction with ANKRA2" evidence="26">
    <location>
        <begin position="4460"/>
        <end position="4465"/>
    </location>
</feature>
<feature type="short sequence motif" description="Endocytosis signal" evidence="4">
    <location>
        <begin position="4522"/>
        <end position="4527"/>
    </location>
</feature>
<feature type="short sequence motif" description="NPXY motif">
    <location>
        <begin position="4603"/>
        <end position="4606"/>
    </location>
</feature>
<feature type="short sequence motif" description="SH2-binding" evidence="4">
    <location>
        <begin position="4606"/>
        <end position="4609"/>
    </location>
</feature>
<feature type="short sequence motif" description="SH3-binding" evidence="4">
    <location>
        <begin position="4619"/>
        <end position="4630"/>
    </location>
</feature>
<feature type="compositionally biased region" description="Polar residues" evidence="8">
    <location>
        <begin position="4634"/>
        <end position="4644"/>
    </location>
</feature>
<feature type="binding site" evidence="3">
    <location>
        <position position="1127"/>
    </location>
    <ligand>
        <name>Ca(2+)</name>
        <dbReference type="ChEBI" id="CHEBI:29108"/>
    </ligand>
</feature>
<feature type="binding site" evidence="3">
    <location>
        <position position="1130"/>
    </location>
    <ligand>
        <name>Ca(2+)</name>
        <dbReference type="ChEBI" id="CHEBI:29108"/>
    </ligand>
</feature>
<feature type="binding site" evidence="3">
    <location>
        <position position="1132"/>
    </location>
    <ligand>
        <name>Ca(2+)</name>
        <dbReference type="ChEBI" id="CHEBI:29108"/>
    </ligand>
</feature>
<feature type="binding site" evidence="3">
    <location>
        <position position="1134"/>
    </location>
    <ligand>
        <name>Ca(2+)</name>
        <dbReference type="ChEBI" id="CHEBI:29108"/>
    </ligand>
</feature>
<feature type="binding site" evidence="3">
    <location>
        <position position="1140"/>
    </location>
    <ligand>
        <name>Ca(2+)</name>
        <dbReference type="ChEBI" id="CHEBI:29108"/>
    </ligand>
</feature>
<feature type="binding site" evidence="3">
    <location>
        <position position="1141"/>
    </location>
    <ligand>
        <name>Ca(2+)</name>
        <dbReference type="ChEBI" id="CHEBI:29108"/>
    </ligand>
</feature>
<feature type="binding site" evidence="20">
    <location>
        <position position="1206"/>
    </location>
    <ligand>
        <name>Ca(2+)</name>
        <dbReference type="ChEBI" id="CHEBI:29108"/>
    </ligand>
</feature>
<feature type="binding site" evidence="20">
    <location>
        <position position="1209"/>
    </location>
    <ligand>
        <name>Ca(2+)</name>
        <dbReference type="ChEBI" id="CHEBI:29108"/>
    </ligand>
</feature>
<feature type="binding site" evidence="20">
    <location>
        <position position="1211"/>
    </location>
    <ligand>
        <name>Ca(2+)</name>
        <dbReference type="ChEBI" id="CHEBI:29108"/>
    </ligand>
</feature>
<feature type="binding site" evidence="20">
    <location>
        <position position="1213"/>
    </location>
    <ligand>
        <name>Ca(2+)</name>
        <dbReference type="ChEBI" id="CHEBI:29108"/>
    </ligand>
</feature>
<feature type="binding site" evidence="20">
    <location>
        <position position="1219"/>
    </location>
    <ligand>
        <name>Ca(2+)</name>
        <dbReference type="ChEBI" id="CHEBI:29108"/>
    </ligand>
</feature>
<feature type="binding site" evidence="20">
    <location>
        <position position="1220"/>
    </location>
    <ligand>
        <name>Ca(2+)</name>
        <dbReference type="ChEBI" id="CHEBI:29108"/>
    </ligand>
</feature>
<feature type="modified residue" description="Phosphoserine" evidence="34">
    <location>
        <position position="4464"/>
    </location>
</feature>
<feature type="modified residue" description="Phosphoserine" evidence="1">
    <location>
        <position position="4467"/>
    </location>
</feature>
<feature type="modified residue" description="Phosphoserine" evidence="34">
    <location>
        <position position="4577"/>
    </location>
</feature>
<feature type="modified residue" description="Phosphoserine" evidence="34">
    <location>
        <position position="4624"/>
    </location>
</feature>
<feature type="modified residue" description="Phosphothreonine" evidence="1">
    <location>
        <position position="4637"/>
    </location>
</feature>
<feature type="modified residue" description="Phosphoserine" evidence="34">
    <location>
        <position position="4658"/>
    </location>
</feature>
<feature type="glycosylation site" description="N-linked (GlcNAc...) asparagine" evidence="4">
    <location>
        <position position="159"/>
    </location>
</feature>
<feature type="glycosylation site" description="N-linked (GlcNAc...) asparagine" evidence="4">
    <location>
        <position position="178"/>
    </location>
</feature>
<feature type="glycosylation site" description="N-linked (GlcNAc...) asparagine" evidence="4">
    <location>
        <position position="259"/>
    </location>
</feature>
<feature type="glycosylation site" description="N-linked (GlcNAc...) asparagine" evidence="4">
    <location>
        <position position="299"/>
    </location>
</feature>
<feature type="glycosylation site" description="N-linked (GlcNAc...) asparagine" evidence="4">
    <location>
        <position position="340"/>
    </location>
</feature>
<feature type="glycosylation site" description="N-linked (GlcNAc...) asparagine" evidence="4">
    <location>
        <position position="462"/>
    </location>
</feature>
<feature type="glycosylation site" description="N-linked (GlcNAc...) asparagine" evidence="4">
    <location>
        <position position="657"/>
    </location>
</feature>
<feature type="glycosylation site" description="N-linked (GlcNAc...) asparagine" evidence="4">
    <location>
        <position position="865"/>
    </location>
</feature>
<feature type="glycosylation site" description="N-linked (GlcNAc...) asparagine" evidence="4">
    <location>
        <position position="1063"/>
    </location>
</feature>
<feature type="glycosylation site" description="N-linked (GlcNAc...) asparagine" evidence="4">
    <location>
        <position position="1187"/>
    </location>
</feature>
<feature type="glycosylation site" description="N-linked (GlcNAc...) asparagine" evidence="4">
    <location>
        <position position="1328"/>
    </location>
</feature>
<feature type="glycosylation site" description="N-linked (GlcNAc...) asparagine" evidence="4">
    <location>
        <position position="1341"/>
    </location>
</feature>
<feature type="glycosylation site" description="N-linked (GlcNAc...) asparagine" evidence="4">
    <location>
        <position position="1384"/>
    </location>
</feature>
<feature type="glycosylation site" description="N-linked (GlcNAc...) asparagine" evidence="4">
    <location>
        <position position="1451"/>
    </location>
</feature>
<feature type="glycosylation site" description="N-linked (GlcNAc...) asparagine" evidence="4">
    <location>
        <position position="1497"/>
    </location>
</feature>
<feature type="glycosylation site" description="N-linked (GlcNAc...) asparagine" evidence="4">
    <location>
        <position position="1551"/>
    </location>
</feature>
<feature type="glycosylation site" description="N-linked (GlcNAc...) asparagine" evidence="4">
    <location>
        <position position="1676"/>
    </location>
</feature>
<feature type="glycosylation site" description="N-linked (GlcNAc...) asparagine" evidence="4">
    <location>
        <position position="1733"/>
    </location>
</feature>
<feature type="glycosylation site" description="N-linked (GlcNAc...) asparagine" evidence="4">
    <location>
        <position position="1811"/>
    </location>
</feature>
<feature type="glycosylation site" description="N-linked (GlcNAc...) asparagine" evidence="4">
    <location>
        <position position="2134"/>
    </location>
</feature>
<feature type="glycosylation site" description="N-linked (GlcNAc...) asparagine" evidence="4">
    <location>
        <position position="2178"/>
    </location>
</feature>
<feature type="glycosylation site" description="N-linked (GlcNAc...) asparagine" evidence="4">
    <location>
        <position position="2225"/>
    </location>
</feature>
<feature type="glycosylation site" description="N-linked (GlcNAc...) asparagine" evidence="4">
    <location>
        <position position="2396"/>
    </location>
</feature>
<feature type="glycosylation site" description="N-linked (GlcNAc...) asparagine" evidence="4">
    <location>
        <position position="2488"/>
    </location>
</feature>
<feature type="glycosylation site" description="N-linked (GlcNAc...) asparagine" evidence="4">
    <location>
        <position position="2548"/>
    </location>
</feature>
<feature type="glycosylation site" description="N-linked (GlcNAc...) asparagine" evidence="4">
    <location>
        <position position="2782"/>
    </location>
</feature>
<feature type="glycosylation site" description="N-linked (GlcNAc...) asparagine" evidence="4">
    <location>
        <position position="2810"/>
    </location>
</feature>
<feature type="glycosylation site" description="N-linked (GlcNAc...) asparagine" evidence="4">
    <location>
        <position position="2949"/>
    </location>
</feature>
<feature type="glycosylation site" description="N-linked (GlcNAc...) asparagine" evidence="4">
    <location>
        <position position="2989"/>
    </location>
</feature>
<feature type="glycosylation site" description="N-linked (GlcNAc...) asparagine" evidence="4">
    <location>
        <position position="3127"/>
    </location>
</feature>
<feature type="glycosylation site" description="N-linked (GlcNAc...) asparagine" evidence="4">
    <location>
        <position position="3213"/>
    </location>
</feature>
<feature type="glycosylation site" description="N-linked (GlcNAc...) asparagine" evidence="4">
    <location>
        <position position="3259"/>
    </location>
</feature>
<feature type="glycosylation site" description="N-linked (GlcNAc...) asparagine" evidence="4">
    <location>
        <position position="3317"/>
    </location>
</feature>
<feature type="glycosylation site" description="N-linked (GlcNAc...) asparagine" evidence="4">
    <location>
        <position position="3357"/>
    </location>
</feature>
<feature type="glycosylation site" description="N-linked (GlcNAc...) asparagine" evidence="4">
    <location>
        <position position="3448"/>
    </location>
</feature>
<feature type="glycosylation site" description="N-linked (GlcNAc...) asparagine" evidence="4">
    <location>
        <position position="3566"/>
    </location>
</feature>
<feature type="glycosylation site" description="N-linked (GlcNAc...) asparagine" evidence="4">
    <location>
        <position position="3682"/>
    </location>
</feature>
<feature type="glycosylation site" description="N-linked (GlcNAc...) asparagine" evidence="4">
    <location>
        <position position="3840"/>
    </location>
</feature>
<feature type="glycosylation site" description="N-linked (GlcNAc...) asparagine" evidence="4">
    <location>
        <position position="3969"/>
    </location>
</feature>
<feature type="glycosylation site" description="N-linked (GlcNAc...) asparagine" evidence="4">
    <location>
        <position position="3980"/>
    </location>
</feature>
<feature type="glycosylation site" description="N-linked (GlcNAc...) asparagine" evidence="4">
    <location>
        <position position="4070"/>
    </location>
</feature>
<feature type="glycosylation site" description="N-linked (GlcNAc...) asparagine" evidence="4">
    <location>
        <position position="4329"/>
    </location>
</feature>
<feature type="disulfide bond" evidence="6">
    <location>
        <begin position="28"/>
        <end position="40"/>
    </location>
</feature>
<feature type="disulfide bond" evidence="6">
    <location>
        <begin position="35"/>
        <end position="53"/>
    </location>
</feature>
<feature type="disulfide bond" evidence="6">
    <location>
        <begin position="47"/>
        <end position="62"/>
    </location>
</feature>
<feature type="disulfide bond" evidence="6">
    <location>
        <begin position="67"/>
        <end position="80"/>
    </location>
</feature>
<feature type="disulfide bond" evidence="6">
    <location>
        <begin position="74"/>
        <end position="93"/>
    </location>
</feature>
<feature type="disulfide bond" evidence="6">
    <location>
        <begin position="87"/>
        <end position="103"/>
    </location>
</feature>
<feature type="disulfide bond" evidence="6">
    <location>
        <begin position="108"/>
        <end position="120"/>
    </location>
</feature>
<feature type="disulfide bond" evidence="6">
    <location>
        <begin position="115"/>
        <end position="133"/>
    </location>
</feature>
<feature type="disulfide bond" evidence="6">
    <location>
        <begin position="127"/>
        <end position="142"/>
    </location>
</feature>
<feature type="disulfide bond" evidence="6">
    <location>
        <begin position="142"/>
        <end position="157"/>
    </location>
</feature>
<feature type="disulfide bond" evidence="6">
    <location>
        <begin position="152"/>
        <end position="170"/>
    </location>
</feature>
<feature type="disulfide bond" evidence="6">
    <location>
        <begin position="164"/>
        <end position="179"/>
    </location>
</feature>
<feature type="disulfide bond" evidence="6">
    <location>
        <begin position="183"/>
        <end position="195"/>
    </location>
</feature>
<feature type="disulfide bond" evidence="6">
    <location>
        <begin position="190"/>
        <end position="208"/>
    </location>
</feature>
<feature type="disulfide bond" evidence="6">
    <location>
        <begin position="202"/>
        <end position="217"/>
    </location>
</feature>
<feature type="disulfide bond" evidence="6">
    <location>
        <begin position="222"/>
        <end position="234"/>
    </location>
</feature>
<feature type="disulfide bond" evidence="6">
    <location>
        <begin position="229"/>
        <end position="247"/>
    </location>
</feature>
<feature type="disulfide bond" evidence="6">
    <location>
        <begin position="241"/>
        <end position="256"/>
    </location>
</feature>
<feature type="disulfide bond" evidence="6">
    <location>
        <begin position="265"/>
        <end position="278"/>
    </location>
</feature>
<feature type="disulfide bond" evidence="6">
    <location>
        <begin position="272"/>
        <end position="291"/>
    </location>
</feature>
<feature type="disulfide bond" evidence="6">
    <location>
        <begin position="285"/>
        <end position="306"/>
    </location>
</feature>
<feature type="disulfide bond" evidence="5">
    <location>
        <begin position="351"/>
        <end position="361"/>
    </location>
</feature>
<feature type="disulfide bond" evidence="5">
    <location>
        <begin position="357"/>
        <end position="370"/>
    </location>
</feature>
<feature type="disulfide bond" evidence="6">
    <location>
        <begin position="1025"/>
        <end position="1037"/>
    </location>
</feature>
<feature type="disulfide bond" evidence="6">
    <location>
        <begin position="1032"/>
        <end position="1050"/>
    </location>
</feature>
<feature type="disulfide bond" evidence="6">
    <location>
        <begin position="1044"/>
        <end position="1059"/>
    </location>
</feature>
<feature type="disulfide bond" evidence="6">
    <location>
        <begin position="1066"/>
        <end position="1079"/>
    </location>
</feature>
<feature type="disulfide bond" evidence="6">
    <location>
        <begin position="1073"/>
        <end position="1092"/>
    </location>
</feature>
<feature type="disulfide bond" evidence="6">
    <location>
        <begin position="1086"/>
        <end position="1101"/>
    </location>
</feature>
<feature type="disulfide bond" evidence="6">
    <location>
        <begin position="1110"/>
        <end position="1122"/>
    </location>
</feature>
<feature type="disulfide bond" evidence="6">
    <location>
        <begin position="1117"/>
        <end position="1135"/>
    </location>
</feature>
<feature type="disulfide bond" evidence="6">
    <location>
        <begin position="1129"/>
        <end position="1144"/>
    </location>
</feature>
<feature type="disulfide bond" evidence="6">
    <location>
        <begin position="1150"/>
        <end position="1162"/>
    </location>
</feature>
<feature type="disulfide bond" evidence="6">
    <location>
        <begin position="1157"/>
        <end position="1175"/>
    </location>
</feature>
<feature type="disulfide bond" evidence="6">
    <location>
        <begin position="1169"/>
        <end position="1184"/>
    </location>
</feature>
<feature type="disulfide bond" evidence="6 20">
    <location>
        <begin position="1188"/>
        <end position="1201"/>
    </location>
</feature>
<feature type="disulfide bond" evidence="6 20">
    <location>
        <begin position="1195"/>
        <end position="1214"/>
    </location>
</feature>
<feature type="disulfide bond" evidence="6 20">
    <location>
        <begin position="1208"/>
        <end position="1223"/>
    </location>
</feature>
<feature type="disulfide bond" evidence="6">
    <location>
        <begin position="1231"/>
        <end position="1244"/>
    </location>
</feature>
<feature type="disulfide bond" evidence="6">
    <location>
        <begin position="1238"/>
        <end position="1257"/>
    </location>
</feature>
<feature type="disulfide bond" evidence="6">
    <location>
        <begin position="1251"/>
        <end position="1267"/>
    </location>
</feature>
<feature type="disulfide bond" evidence="6">
    <location>
        <begin position="1272"/>
        <end position="1284"/>
    </location>
</feature>
<feature type="disulfide bond" evidence="6">
    <location>
        <begin position="1279"/>
        <end position="1297"/>
    </location>
</feature>
<feature type="disulfide bond" evidence="6">
    <location>
        <begin position="1291"/>
        <end position="1306"/>
    </location>
</feature>
<feature type="disulfide bond" evidence="6">
    <location>
        <begin position="1313"/>
        <end position="1326"/>
    </location>
</feature>
<feature type="disulfide bond" evidence="6">
    <location>
        <begin position="1320"/>
        <end position="1339"/>
    </location>
</feature>
<feature type="disulfide bond" evidence="6">
    <location>
        <begin position="1333"/>
        <end position="1349"/>
    </location>
</feature>
<feature type="disulfide bond" evidence="5">
    <location>
        <begin position="1354"/>
        <end position="1365"/>
    </location>
</feature>
<feature type="disulfide bond" evidence="5">
    <location>
        <begin position="1361"/>
        <end position="1374"/>
    </location>
</feature>
<feature type="disulfide bond" evidence="5">
    <location>
        <begin position="1376"/>
        <end position="1389"/>
    </location>
</feature>
<feature type="disulfide bond" evidence="5">
    <location>
        <begin position="1395"/>
        <end position="1405"/>
    </location>
</feature>
<feature type="disulfide bond" evidence="5">
    <location>
        <begin position="1401"/>
        <end position="1414"/>
    </location>
</feature>
<feature type="disulfide bond" evidence="5">
    <location>
        <begin position="1416"/>
        <end position="1429"/>
    </location>
</feature>
<feature type="disulfide bond" evidence="6">
    <location>
        <begin position="2701"/>
        <end position="2713"/>
    </location>
</feature>
<feature type="disulfide bond" evidence="6">
    <location>
        <begin position="2708"/>
        <end position="2726"/>
    </location>
</feature>
<feature type="disulfide bond" evidence="6">
    <location>
        <begin position="2720"/>
        <end position="2737"/>
    </location>
</feature>
<feature type="disulfide bond" evidence="6">
    <location>
        <begin position="2742"/>
        <end position="2754"/>
    </location>
</feature>
<feature type="disulfide bond" evidence="6">
    <location>
        <begin position="2749"/>
        <end position="2767"/>
    </location>
</feature>
<feature type="disulfide bond" evidence="6">
    <location>
        <begin position="2761"/>
        <end position="2776"/>
    </location>
</feature>
<feature type="disulfide bond" evidence="6">
    <location>
        <begin position="2781"/>
        <end position="2794"/>
    </location>
</feature>
<feature type="disulfide bond" evidence="6">
    <location>
        <begin position="2789"/>
        <end position="2807"/>
    </location>
</feature>
<feature type="disulfide bond" evidence="6">
    <location>
        <begin position="2801"/>
        <end position="2818"/>
    </location>
</feature>
<feature type="disulfide bond" evidence="6">
    <location>
        <begin position="2823"/>
        <end position="2836"/>
    </location>
</feature>
<feature type="disulfide bond" evidence="6">
    <location>
        <begin position="2830"/>
        <end position="2849"/>
    </location>
</feature>
<feature type="disulfide bond" evidence="6">
    <location>
        <begin position="2843"/>
        <end position="2860"/>
    </location>
</feature>
<feature type="disulfide bond" evidence="6">
    <location>
        <begin position="2865"/>
        <end position="2878"/>
    </location>
</feature>
<feature type="disulfide bond" evidence="6">
    <location>
        <begin position="2872"/>
        <end position="2891"/>
    </location>
</feature>
<feature type="disulfide bond" evidence="6">
    <location>
        <begin position="2885"/>
        <end position="2901"/>
    </location>
</feature>
<feature type="disulfide bond" evidence="6">
    <location>
        <begin position="2908"/>
        <end position="2920"/>
    </location>
</feature>
<feature type="disulfide bond" evidence="6">
    <location>
        <begin position="2915"/>
        <end position="2933"/>
    </location>
</feature>
<feature type="disulfide bond" evidence="6">
    <location>
        <begin position="2927"/>
        <end position="2945"/>
    </location>
</feature>
<feature type="disulfide bond" evidence="6">
    <location>
        <begin position="2950"/>
        <end position="2967"/>
    </location>
</feature>
<feature type="disulfide bond" evidence="6">
    <location>
        <begin position="2957"/>
        <end position="2980"/>
    </location>
</feature>
<feature type="disulfide bond" evidence="6">
    <location>
        <begin position="2974"/>
        <end position="2990"/>
    </location>
</feature>
<feature type="disulfide bond" evidence="6">
    <location>
        <begin position="2995"/>
        <end position="3007"/>
    </location>
</feature>
<feature type="disulfide bond" evidence="6">
    <location>
        <begin position="3002"/>
        <end position="3020"/>
    </location>
</feature>
<feature type="disulfide bond" evidence="6">
    <location>
        <begin position="3014"/>
        <end position="3029"/>
    </location>
</feature>
<feature type="disulfide bond" evidence="6">
    <location>
        <begin position="3034"/>
        <end position="3046"/>
    </location>
</feature>
<feature type="disulfide bond" evidence="6">
    <location>
        <begin position="3041"/>
        <end position="3059"/>
    </location>
</feature>
<feature type="disulfide bond" evidence="6">
    <location>
        <begin position="3053"/>
        <end position="3070"/>
    </location>
</feature>
<feature type="disulfide bond" evidence="6">
    <location>
        <begin position="3077"/>
        <end position="3089"/>
    </location>
</feature>
<feature type="disulfide bond" evidence="6">
    <location>
        <begin position="3084"/>
        <end position="3102"/>
    </location>
</feature>
<feature type="disulfide bond" evidence="6">
    <location>
        <begin position="3096"/>
        <end position="3111"/>
    </location>
</feature>
<feature type="disulfide bond" evidence="5">
    <location>
        <begin position="3116"/>
        <end position="3128"/>
    </location>
</feature>
<feature type="disulfide bond" evidence="5">
    <location>
        <begin position="3124"/>
        <end position="3137"/>
    </location>
</feature>
<feature type="disulfide bond" evidence="5">
    <location>
        <begin position="3139"/>
        <end position="3152"/>
    </location>
</feature>
<feature type="disulfide bond" evidence="5">
    <location>
        <begin position="3158"/>
        <end position="3169"/>
    </location>
</feature>
<feature type="disulfide bond" evidence="5">
    <location>
        <begin position="3165"/>
        <end position="3178"/>
    </location>
</feature>
<feature type="disulfide bond" evidence="5">
    <location>
        <begin position="3180"/>
        <end position="3193"/>
    </location>
</feature>
<feature type="disulfide bond" evidence="6">
    <location>
        <begin position="3514"/>
        <end position="3527"/>
    </location>
</feature>
<feature type="disulfide bond" evidence="6">
    <location>
        <begin position="3521"/>
        <end position="3540"/>
    </location>
</feature>
<feature type="disulfide bond" evidence="6">
    <location>
        <begin position="3534"/>
        <end position="3550"/>
    </location>
</feature>
<feature type="disulfide bond" evidence="6">
    <location>
        <begin position="3555"/>
        <end position="3567"/>
    </location>
</feature>
<feature type="disulfide bond" evidence="6">
    <location>
        <begin position="3562"/>
        <end position="3580"/>
    </location>
</feature>
<feature type="disulfide bond" evidence="6">
    <location>
        <begin position="3574"/>
        <end position="3591"/>
    </location>
</feature>
<feature type="disulfide bond" evidence="6">
    <location>
        <begin position="3596"/>
        <end position="3608"/>
    </location>
</feature>
<feature type="disulfide bond" evidence="6">
    <location>
        <begin position="3603"/>
        <end position="3621"/>
    </location>
</feature>
<feature type="disulfide bond" evidence="6">
    <location>
        <begin position="3615"/>
        <end position="3632"/>
    </location>
</feature>
<feature type="disulfide bond" evidence="6">
    <location>
        <begin position="3637"/>
        <end position="3649"/>
    </location>
</feature>
<feature type="disulfide bond" evidence="6">
    <location>
        <begin position="3644"/>
        <end position="3662"/>
    </location>
</feature>
<feature type="disulfide bond" evidence="6">
    <location>
        <begin position="3656"/>
        <end position="3673"/>
    </location>
</feature>
<feature type="disulfide bond" evidence="6">
    <location>
        <begin position="3680"/>
        <end position="3694"/>
    </location>
</feature>
<feature type="disulfide bond" evidence="6">
    <location>
        <begin position="3688"/>
        <end position="3707"/>
    </location>
</feature>
<feature type="disulfide bond" evidence="6">
    <location>
        <begin position="3701"/>
        <end position="3716"/>
    </location>
</feature>
<feature type="disulfide bond" evidence="6">
    <location>
        <begin position="3721"/>
        <end position="3734"/>
    </location>
</feature>
<feature type="disulfide bond" evidence="6">
    <location>
        <begin position="3729"/>
        <end position="3747"/>
    </location>
</feature>
<feature type="disulfide bond" evidence="6">
    <location>
        <begin position="3741"/>
        <end position="3756"/>
    </location>
</feature>
<feature type="disulfide bond" evidence="6">
    <location>
        <begin position="3761"/>
        <end position="3773"/>
    </location>
</feature>
<feature type="disulfide bond" evidence="6">
    <location>
        <begin position="3768"/>
        <end position="3786"/>
    </location>
</feature>
<feature type="disulfide bond" evidence="6">
    <location>
        <begin position="3780"/>
        <end position="3795"/>
    </location>
</feature>
<feature type="disulfide bond" evidence="6">
    <location>
        <begin position="3800"/>
        <end position="3812"/>
    </location>
</feature>
<feature type="disulfide bond" evidence="6">
    <location>
        <begin position="3807"/>
        <end position="3825"/>
    </location>
</feature>
<feature type="disulfide bond" evidence="6">
    <location>
        <begin position="3819"/>
        <end position="3834"/>
    </location>
</feature>
<feature type="disulfide bond" evidence="6">
    <location>
        <begin position="3844"/>
        <end position="3856"/>
    </location>
</feature>
<feature type="disulfide bond" evidence="6">
    <location>
        <begin position="3851"/>
        <end position="3869"/>
    </location>
</feature>
<feature type="disulfide bond" evidence="6">
    <location>
        <begin position="3863"/>
        <end position="3880"/>
    </location>
</feature>
<feature type="disulfide bond" evidence="6">
    <location>
        <begin position="3885"/>
        <end position="3898"/>
    </location>
</feature>
<feature type="disulfide bond" evidence="6">
    <location>
        <begin position="3893"/>
        <end position="3911"/>
    </location>
</feature>
<feature type="disulfide bond" evidence="6">
    <location>
        <begin position="3905"/>
        <end position="3922"/>
    </location>
</feature>
<feature type="disulfide bond" evidence="6">
    <location>
        <begin position="3930"/>
        <end position="3942"/>
    </location>
</feature>
<feature type="disulfide bond" evidence="6">
    <location>
        <begin position="3937"/>
        <end position="3955"/>
    </location>
</feature>
<feature type="disulfide bond" evidence="6">
    <location>
        <begin position="3949"/>
        <end position="3964"/>
    </location>
</feature>
<feature type="disulfide bond" evidence="5">
    <location>
        <begin position="3972"/>
        <end position="3981"/>
    </location>
</feature>
<feature type="disulfide bond" evidence="5">
    <location>
        <begin position="3977"/>
        <end position="3991"/>
    </location>
</feature>
<feature type="disulfide bond" evidence="5">
    <location>
        <begin position="4013"/>
        <end position="4023"/>
    </location>
</feature>
<feature type="disulfide bond" evidence="5">
    <location>
        <begin position="4019"/>
        <end position="4032"/>
    </location>
</feature>
<feature type="disulfide bond" evidence="5">
    <location>
        <begin position="4034"/>
        <end position="4049"/>
    </location>
</feature>
<feature type="disulfide bond" evidence="5">
    <location>
        <begin position="4383"/>
        <end position="4391"/>
    </location>
</feature>
<feature type="disulfide bond" evidence="5">
    <location>
        <begin position="4385"/>
        <end position="4401"/>
    </location>
</feature>
<feature type="disulfide bond" evidence="5">
    <location>
        <begin position="4403"/>
        <end position="4412"/>
    </location>
</feature>
<feature type="mutagenesis site" description="Reduced interaction with ARH and dynein." evidence="27">
    <original>Y</original>
    <variation>C</variation>
    <location>
        <position position="4527"/>
    </location>
</feature>
<feature type="strand" evidence="37">
    <location>
        <begin position="32"/>
        <end position="34"/>
    </location>
</feature>
<feature type="strand" evidence="37">
    <location>
        <begin position="40"/>
        <end position="42"/>
    </location>
</feature>
<feature type="helix" evidence="37">
    <location>
        <begin position="43"/>
        <end position="45"/>
    </location>
</feature>
<feature type="strand" evidence="37">
    <location>
        <begin position="48"/>
        <end position="51"/>
    </location>
</feature>
<feature type="turn" evidence="37">
    <location>
        <begin position="57"/>
        <end position="59"/>
    </location>
</feature>
<feature type="strand" evidence="37">
    <location>
        <begin position="71"/>
        <end position="73"/>
    </location>
</feature>
<feature type="turn" evidence="37">
    <location>
        <begin position="75"/>
        <end position="77"/>
    </location>
</feature>
<feature type="strand" evidence="37">
    <location>
        <begin position="80"/>
        <end position="82"/>
    </location>
</feature>
<feature type="turn" evidence="37">
    <location>
        <begin position="83"/>
        <end position="87"/>
    </location>
</feature>
<feature type="strand" evidence="37">
    <location>
        <begin position="88"/>
        <end position="90"/>
    </location>
</feature>
<feature type="strand" evidence="37">
    <location>
        <begin position="93"/>
        <end position="95"/>
    </location>
</feature>
<feature type="helix" evidence="37">
    <location>
        <begin position="98"/>
        <end position="101"/>
    </location>
</feature>
<feature type="helix" evidence="41">
    <location>
        <begin position="198"/>
        <end position="200"/>
    </location>
</feature>
<feature type="strand" evidence="41">
    <location>
        <begin position="201"/>
        <end position="205"/>
    </location>
</feature>
<feature type="helix" evidence="41">
    <location>
        <begin position="212"/>
        <end position="214"/>
    </location>
</feature>
<feature type="strand" evidence="41">
    <location>
        <begin position="226"/>
        <end position="228"/>
    </location>
</feature>
<feature type="strand" evidence="40">
    <location>
        <begin position="230"/>
        <end position="232"/>
    </location>
</feature>
<feature type="strand" evidence="41">
    <location>
        <begin position="234"/>
        <end position="236"/>
    </location>
</feature>
<feature type="helix" evidence="41">
    <location>
        <begin position="237"/>
        <end position="239"/>
    </location>
</feature>
<feature type="strand" evidence="41">
    <location>
        <begin position="242"/>
        <end position="244"/>
    </location>
</feature>
<feature type="strand" evidence="41">
    <location>
        <begin position="247"/>
        <end position="249"/>
    </location>
</feature>
<feature type="helix" evidence="41">
    <location>
        <begin position="251"/>
        <end position="253"/>
    </location>
</feature>
<feature type="turn" evidence="41">
    <location>
        <begin position="262"/>
        <end position="264"/>
    </location>
</feature>
<feature type="strand" evidence="41">
    <location>
        <begin position="269"/>
        <end position="271"/>
    </location>
</feature>
<feature type="turn" evidence="41">
    <location>
        <begin position="273"/>
        <end position="275"/>
    </location>
</feature>
<feature type="strand" evidence="41">
    <location>
        <begin position="278"/>
        <end position="280"/>
    </location>
</feature>
<feature type="turn" evidence="41">
    <location>
        <begin position="281"/>
        <end position="285"/>
    </location>
</feature>
<feature type="strand" evidence="41">
    <location>
        <begin position="286"/>
        <end position="288"/>
    </location>
</feature>
<feature type="turn" evidence="41">
    <location>
        <begin position="300"/>
        <end position="303"/>
    </location>
</feature>
<feature type="helix" evidence="41">
    <location>
        <begin position="310"/>
        <end position="312"/>
    </location>
</feature>
<feature type="strand" evidence="40">
    <location>
        <begin position="317"/>
        <end position="330"/>
    </location>
</feature>
<feature type="strand" evidence="41">
    <location>
        <begin position="335"/>
        <end position="337"/>
    </location>
</feature>
<feature type="turn" evidence="41">
    <location>
        <begin position="339"/>
        <end position="341"/>
    </location>
</feature>
<feature type="strand" evidence="41">
    <location>
        <begin position="345"/>
        <end position="347"/>
    </location>
</feature>
<feature type="helix" evidence="40">
    <location>
        <begin position="350"/>
        <end position="352"/>
    </location>
</feature>
<feature type="strand" evidence="41">
    <location>
        <begin position="356"/>
        <end position="359"/>
    </location>
</feature>
<feature type="strand" evidence="41">
    <location>
        <begin position="362"/>
        <end position="364"/>
    </location>
</feature>
<feature type="strand" evidence="41">
    <location>
        <begin position="367"/>
        <end position="369"/>
    </location>
</feature>
<feature type="strand" evidence="41">
    <location>
        <begin position="376"/>
        <end position="379"/>
    </location>
</feature>
<feature type="turn" evidence="41">
    <location>
        <begin position="380"/>
        <end position="382"/>
    </location>
</feature>
<feature type="strand" evidence="41">
    <location>
        <begin position="383"/>
        <end position="386"/>
    </location>
</feature>
<feature type="strand" evidence="41">
    <location>
        <begin position="394"/>
        <end position="398"/>
    </location>
</feature>
<feature type="strand" evidence="41">
    <location>
        <begin position="400"/>
        <end position="409"/>
    </location>
</feature>
<feature type="strand" evidence="41">
    <location>
        <begin position="414"/>
        <end position="417"/>
    </location>
</feature>
<feature type="strand" evidence="41">
    <location>
        <begin position="428"/>
        <end position="431"/>
    </location>
</feature>
<feature type="turn" evidence="41">
    <location>
        <begin position="432"/>
        <end position="435"/>
    </location>
</feature>
<feature type="strand" evidence="41">
    <location>
        <begin position="436"/>
        <end position="441"/>
    </location>
</feature>
<feature type="turn" evidence="41">
    <location>
        <begin position="442"/>
        <end position="445"/>
    </location>
</feature>
<feature type="strand" evidence="41">
    <location>
        <begin position="446"/>
        <end position="451"/>
    </location>
</feature>
<feature type="strand" evidence="41">
    <location>
        <begin position="458"/>
        <end position="461"/>
    </location>
</feature>
<feature type="strand" evidence="41">
    <location>
        <begin position="468"/>
        <end position="474"/>
    </location>
</feature>
<feature type="turn" evidence="41">
    <location>
        <begin position="475"/>
        <end position="478"/>
    </location>
</feature>
<feature type="strand" evidence="41">
    <location>
        <begin position="479"/>
        <end position="484"/>
    </location>
</feature>
<feature type="turn" evidence="41">
    <location>
        <begin position="485"/>
        <end position="488"/>
    </location>
</feature>
<feature type="strand" evidence="41">
    <location>
        <begin position="489"/>
        <end position="494"/>
    </location>
</feature>
<feature type="helix" evidence="41">
    <location>
        <begin position="495"/>
        <end position="497"/>
    </location>
</feature>
<feature type="strand" evidence="41">
    <location>
        <begin position="501"/>
        <end position="504"/>
    </location>
</feature>
<feature type="strand" evidence="41">
    <location>
        <begin position="509"/>
        <end position="516"/>
    </location>
</feature>
<feature type="turn" evidence="41">
    <location>
        <begin position="518"/>
        <end position="520"/>
    </location>
</feature>
<feature type="strand" evidence="41">
    <location>
        <begin position="522"/>
        <end position="528"/>
    </location>
</feature>
<feature type="strand" evidence="41">
    <location>
        <begin position="536"/>
        <end position="541"/>
    </location>
</feature>
<feature type="strand" evidence="40">
    <location>
        <begin position="544"/>
        <end position="546"/>
    </location>
</feature>
<feature type="strand" evidence="41">
    <location>
        <begin position="548"/>
        <end position="551"/>
    </location>
</feature>
<feature type="strand" evidence="41">
    <location>
        <begin position="558"/>
        <end position="564"/>
    </location>
</feature>
<feature type="turn" evidence="41">
    <location>
        <begin position="565"/>
        <end position="568"/>
    </location>
</feature>
<feature type="strand" evidence="41">
    <location>
        <begin position="569"/>
        <end position="574"/>
    </location>
</feature>
<feature type="turn" evidence="41">
    <location>
        <begin position="575"/>
        <end position="578"/>
    </location>
</feature>
<feature type="strand" evidence="41">
    <location>
        <begin position="579"/>
        <end position="584"/>
    </location>
</feature>
<feature type="strand" evidence="41">
    <location>
        <begin position="591"/>
        <end position="596"/>
    </location>
</feature>
<feature type="turn" evidence="41">
    <location>
        <begin position="597"/>
        <end position="599"/>
    </location>
</feature>
<feature type="strand" evidence="41">
    <location>
        <begin position="601"/>
        <end position="603"/>
    </location>
</feature>
<feature type="strand" evidence="41">
    <location>
        <begin position="607"/>
        <end position="609"/>
    </location>
</feature>
<feature type="strand" evidence="41">
    <location>
        <begin position="612"/>
        <end position="617"/>
    </location>
</feature>
<feature type="turn" evidence="41">
    <location>
        <begin position="618"/>
        <end position="621"/>
    </location>
</feature>
<feature type="strand" evidence="41">
    <location>
        <begin position="622"/>
        <end position="629"/>
    </location>
</feature>
<feature type="strand" evidence="41">
    <location>
        <begin position="635"/>
        <end position="639"/>
    </location>
</feature>
<feature type="strand" evidence="41">
    <location>
        <begin position="645"/>
        <end position="650"/>
    </location>
</feature>
<feature type="helix" evidence="41">
    <location>
        <begin position="661"/>
        <end position="663"/>
    </location>
</feature>
<feature type="helix" evidence="41">
    <location>
        <begin position="665"/>
        <end position="668"/>
    </location>
</feature>
<feature type="strand" evidence="41">
    <location>
        <begin position="670"/>
        <end position="675"/>
    </location>
</feature>
<feature type="turn" evidence="41">
    <location>
        <begin position="678"/>
        <end position="684"/>
    </location>
</feature>
<feature type="strand" evidence="41">
    <location>
        <begin position="686"/>
        <end position="689"/>
    </location>
</feature>
<feature type="strand" evidence="41">
    <location>
        <begin position="694"/>
        <end position="696"/>
    </location>
</feature>
<feature type="strand" evidence="41">
    <location>
        <begin position="700"/>
        <end position="705"/>
    </location>
</feature>
<feature type="strand" evidence="41">
    <location>
        <begin position="708"/>
        <end position="721"/>
    </location>
</feature>
<feature type="strand" evidence="41">
    <location>
        <begin position="723"/>
        <end position="727"/>
    </location>
</feature>
<feature type="strand" evidence="40">
    <location>
        <begin position="731"/>
        <end position="736"/>
    </location>
</feature>
<feature type="strand" evidence="41">
    <location>
        <begin position="742"/>
        <end position="748"/>
    </location>
</feature>
<feature type="turn" evidence="41">
    <location>
        <begin position="749"/>
        <end position="752"/>
    </location>
</feature>
<feature type="strand" evidence="41">
    <location>
        <begin position="753"/>
        <end position="758"/>
    </location>
</feature>
<feature type="turn" evidence="41">
    <location>
        <begin position="759"/>
        <end position="762"/>
    </location>
</feature>
<feature type="strand" evidence="41">
    <location>
        <begin position="763"/>
        <end position="768"/>
    </location>
</feature>
<feature type="strand" evidence="41">
    <location>
        <begin position="775"/>
        <end position="778"/>
    </location>
</feature>
<feature type="strand" evidence="41">
    <location>
        <begin position="785"/>
        <end position="791"/>
    </location>
</feature>
<feature type="turn" evidence="41">
    <location>
        <begin position="792"/>
        <end position="795"/>
    </location>
</feature>
<feature type="strand" evidence="41">
    <location>
        <begin position="796"/>
        <end position="801"/>
    </location>
</feature>
<feature type="turn" evidence="41">
    <location>
        <begin position="802"/>
        <end position="805"/>
    </location>
</feature>
<feature type="strand" evidence="41">
    <location>
        <begin position="806"/>
        <end position="811"/>
    </location>
</feature>
<feature type="turn" evidence="41">
    <location>
        <begin position="812"/>
        <end position="814"/>
    </location>
</feature>
<feature type="strand" evidence="41">
    <location>
        <begin position="817"/>
        <end position="821"/>
    </location>
</feature>
<feature type="strand" evidence="41">
    <location>
        <begin position="825"/>
        <end position="833"/>
    </location>
</feature>
<feature type="turn" evidence="41">
    <location>
        <begin position="834"/>
        <end position="837"/>
    </location>
</feature>
<feature type="strand" evidence="41">
    <location>
        <begin position="838"/>
        <end position="843"/>
    </location>
</feature>
<feature type="strand" evidence="41">
    <location>
        <begin position="845"/>
        <end position="847"/>
    </location>
</feature>
<feature type="strand" evidence="41">
    <location>
        <begin position="849"/>
        <end position="854"/>
    </location>
</feature>
<feature type="strand" evidence="41">
    <location>
        <begin position="861"/>
        <end position="864"/>
    </location>
</feature>
<feature type="strand" evidence="41">
    <location>
        <begin position="871"/>
        <end position="877"/>
    </location>
</feature>
<feature type="turn" evidence="41">
    <location>
        <begin position="878"/>
        <end position="881"/>
    </location>
</feature>
<feature type="strand" evidence="41">
    <location>
        <begin position="882"/>
        <end position="890"/>
    </location>
</feature>
<feature type="strand" evidence="41">
    <location>
        <begin position="893"/>
        <end position="897"/>
    </location>
</feature>
<feature type="strand" evidence="41">
    <location>
        <begin position="913"/>
        <end position="921"/>
    </location>
</feature>
<feature type="strand" evidence="41">
    <location>
        <begin position="924"/>
        <end position="929"/>
    </location>
</feature>
<feature type="turn" evidence="41">
    <location>
        <begin position="930"/>
        <end position="933"/>
    </location>
</feature>
<feature type="strand" evidence="41">
    <location>
        <begin position="934"/>
        <end position="943"/>
    </location>
</feature>
<feature type="strand" evidence="41">
    <location>
        <begin position="947"/>
        <end position="950"/>
    </location>
</feature>
<feature type="strand" evidence="41">
    <location>
        <begin position="954"/>
        <end position="963"/>
    </location>
</feature>
<feature type="turn" evidence="41">
    <location>
        <begin position="964"/>
        <end position="967"/>
    </location>
</feature>
<feature type="strand" evidence="41">
    <location>
        <begin position="976"/>
        <end position="978"/>
    </location>
</feature>
<feature type="helix" evidence="41">
    <location>
        <begin position="979"/>
        <end position="982"/>
    </location>
</feature>
<feature type="strand" evidence="41">
    <location>
        <begin position="984"/>
        <end position="990"/>
    </location>
</feature>
<feature type="turn" evidence="41">
    <location>
        <begin position="991"/>
        <end position="993"/>
    </location>
</feature>
<feature type="strand" evidence="41">
    <location>
        <begin position="994"/>
        <end position="998"/>
    </location>
</feature>
<feature type="strand" evidence="41">
    <location>
        <begin position="1003"/>
        <end position="1005"/>
    </location>
</feature>
<feature type="strand" evidence="41">
    <location>
        <begin position="1009"/>
        <end position="1014"/>
    </location>
</feature>
<feature type="turn" evidence="41">
    <location>
        <begin position="1016"/>
        <end position="1018"/>
    </location>
</feature>
<feature type="strand" evidence="41">
    <location>
        <begin position="1029"/>
        <end position="1031"/>
    </location>
</feature>
<feature type="strand" evidence="41">
    <location>
        <begin position="1037"/>
        <end position="1039"/>
    </location>
</feature>
<feature type="helix" evidence="41">
    <location>
        <begin position="1040"/>
        <end position="1042"/>
    </location>
</feature>
<feature type="strand" evidence="41">
    <location>
        <begin position="1045"/>
        <end position="1047"/>
    </location>
</feature>
<feature type="strand" evidence="41">
    <location>
        <begin position="1049"/>
        <end position="1053"/>
    </location>
</feature>
<feature type="strand" evidence="41">
    <location>
        <begin position="1070"/>
        <end position="1072"/>
    </location>
</feature>
<feature type="strand" evidence="41">
    <location>
        <begin position="1079"/>
        <end position="1081"/>
    </location>
</feature>
<feature type="helix" evidence="41">
    <location>
        <begin position="1082"/>
        <end position="1084"/>
    </location>
</feature>
<feature type="strand" evidence="41">
    <location>
        <begin position="1087"/>
        <end position="1089"/>
    </location>
</feature>
<feature type="turn" evidence="41">
    <location>
        <begin position="1096"/>
        <end position="1100"/>
    </location>
</feature>
<feature type="strand" evidence="41">
    <location>
        <begin position="1114"/>
        <end position="1116"/>
    </location>
</feature>
<feature type="strand" evidence="41">
    <location>
        <begin position="1122"/>
        <end position="1124"/>
    </location>
</feature>
<feature type="helix" evidence="41">
    <location>
        <begin position="1125"/>
        <end position="1127"/>
    </location>
</feature>
<feature type="strand" evidence="41">
    <location>
        <begin position="1130"/>
        <end position="1132"/>
    </location>
</feature>
<feature type="strand" evidence="41">
    <location>
        <begin position="1136"/>
        <end position="1138"/>
    </location>
</feature>
<feature type="helix" evidence="41">
    <location>
        <begin position="1139"/>
        <end position="1141"/>
    </location>
</feature>
<feature type="strand" evidence="40">
    <location>
        <begin position="1146"/>
        <end position="1148"/>
    </location>
</feature>
<feature type="strand" evidence="41">
    <location>
        <begin position="1155"/>
        <end position="1157"/>
    </location>
</feature>
<feature type="turn" evidence="41">
    <location>
        <begin position="1158"/>
        <end position="1160"/>
    </location>
</feature>
<feature type="strand" evidence="41">
    <location>
        <begin position="1161"/>
        <end position="1163"/>
    </location>
</feature>
<feature type="helix" evidence="41">
    <location>
        <begin position="1165"/>
        <end position="1167"/>
    </location>
</feature>
<feature type="strand" evidence="41">
    <location>
        <begin position="1170"/>
        <end position="1172"/>
    </location>
</feature>
<feature type="strand" evidence="40">
    <location>
        <begin position="1175"/>
        <end position="1177"/>
    </location>
</feature>
<feature type="helix" evidence="41">
    <location>
        <begin position="1179"/>
        <end position="1181"/>
    </location>
</feature>
<feature type="strand" evidence="41">
    <location>
        <begin position="1192"/>
        <end position="1194"/>
    </location>
</feature>
<feature type="strand" evidence="35">
    <location>
        <begin position="1196"/>
        <end position="1199"/>
    </location>
</feature>
<feature type="strand" evidence="41">
    <location>
        <begin position="1201"/>
        <end position="1203"/>
    </location>
</feature>
<feature type="helix" evidence="41">
    <location>
        <begin position="1204"/>
        <end position="1206"/>
    </location>
</feature>
<feature type="strand" evidence="41">
    <location>
        <begin position="1207"/>
        <end position="1211"/>
    </location>
</feature>
<feature type="strand" evidence="35">
    <location>
        <begin position="1214"/>
        <end position="1217"/>
    </location>
</feature>
<feature type="turn" evidence="41">
    <location>
        <begin position="1218"/>
        <end position="1222"/>
    </location>
</feature>
<feature type="strand" evidence="39">
    <location>
        <begin position="1235"/>
        <end position="1237"/>
    </location>
</feature>
<feature type="turn" evidence="39">
    <location>
        <begin position="1239"/>
        <end position="1241"/>
    </location>
</feature>
<feature type="strand" evidence="39">
    <location>
        <begin position="1244"/>
        <end position="1246"/>
    </location>
</feature>
<feature type="helix" evidence="39">
    <location>
        <begin position="1247"/>
        <end position="1249"/>
    </location>
</feature>
<feature type="strand" evidence="39">
    <location>
        <begin position="1250"/>
        <end position="1254"/>
    </location>
</feature>
<feature type="strand" evidence="39">
    <location>
        <begin position="1257"/>
        <end position="1260"/>
    </location>
</feature>
<feature type="helix" evidence="39">
    <location>
        <begin position="1261"/>
        <end position="1263"/>
    </location>
</feature>
<feature type="strand" evidence="41">
    <location>
        <begin position="1276"/>
        <end position="1278"/>
    </location>
</feature>
<feature type="strand" evidence="41">
    <location>
        <begin position="1284"/>
        <end position="1286"/>
    </location>
</feature>
<feature type="helix" evidence="41">
    <location>
        <begin position="1287"/>
        <end position="1289"/>
    </location>
</feature>
<feature type="strand" evidence="41">
    <location>
        <begin position="1292"/>
        <end position="1294"/>
    </location>
</feature>
<feature type="strand" evidence="41">
    <location>
        <begin position="1298"/>
        <end position="1300"/>
    </location>
</feature>
<feature type="helix" evidence="41">
    <location>
        <begin position="1301"/>
        <end position="1304"/>
    </location>
</feature>
<feature type="strand" evidence="36">
    <location>
        <begin position="1308"/>
        <end position="1310"/>
    </location>
</feature>
<feature type="strand" evidence="38">
    <location>
        <begin position="1314"/>
        <end position="1316"/>
    </location>
</feature>
<feature type="helix" evidence="38">
    <location>
        <begin position="1329"/>
        <end position="1331"/>
    </location>
</feature>
<feature type="strand" evidence="38">
    <location>
        <begin position="1334"/>
        <end position="1336"/>
    </location>
</feature>
<feature type="strand" evidence="36">
    <location>
        <begin position="1338"/>
        <end position="1342"/>
    </location>
</feature>
<feature type="helix" evidence="38">
    <location>
        <begin position="1357"/>
        <end position="1359"/>
    </location>
</feature>
<feature type="strand" evidence="38">
    <location>
        <begin position="1360"/>
        <end position="1366"/>
    </location>
</feature>
<feature type="strand" evidence="38">
    <location>
        <begin position="1369"/>
        <end position="1371"/>
    </location>
</feature>
<feature type="strand" evidence="38">
    <location>
        <begin position="1373"/>
        <end position="1375"/>
    </location>
</feature>
<feature type="strand" evidence="38">
    <location>
        <begin position="1380"/>
        <end position="1382"/>
    </location>
</feature>
<feature type="strand" evidence="38">
    <location>
        <begin position="1389"/>
        <end position="1391"/>
    </location>
</feature>
<feature type="turn" evidence="38">
    <location>
        <begin position="1394"/>
        <end position="1396"/>
    </location>
</feature>
<feature type="strand" evidence="38">
    <location>
        <begin position="1400"/>
        <end position="1403"/>
    </location>
</feature>
<feature type="strand" evidence="38">
    <location>
        <begin position="1405"/>
        <end position="1407"/>
    </location>
</feature>
<feature type="strand" evidence="38">
    <location>
        <begin position="1412"/>
        <end position="1414"/>
    </location>
</feature>
<feature type="strand" evidence="38">
    <location>
        <begin position="1420"/>
        <end position="1422"/>
    </location>
</feature>
<feature type="strand" evidence="38">
    <location>
        <begin position="1429"/>
        <end position="1431"/>
    </location>
</feature>
<feature type="strand" evidence="38">
    <location>
        <begin position="1438"/>
        <end position="1442"/>
    </location>
</feature>
<feature type="strand" evidence="38">
    <location>
        <begin position="1447"/>
        <end position="1453"/>
    </location>
</feature>
<feature type="strand" evidence="38">
    <location>
        <begin position="1456"/>
        <end position="1462"/>
    </location>
</feature>
<feature type="strand" evidence="38">
    <location>
        <begin position="1469"/>
        <end position="1475"/>
    </location>
</feature>
<feature type="turn" evidence="38">
    <location>
        <begin position="1476"/>
        <end position="1479"/>
    </location>
</feature>
<feature type="strand" evidence="38">
    <location>
        <begin position="1480"/>
        <end position="1485"/>
    </location>
</feature>
<feature type="turn" evidence="38">
    <location>
        <begin position="1486"/>
        <end position="1489"/>
    </location>
</feature>
<feature type="strand" evidence="38">
    <location>
        <begin position="1490"/>
        <end position="1495"/>
    </location>
</feature>
<feature type="strand" evidence="38">
    <location>
        <begin position="1502"/>
        <end position="1505"/>
    </location>
</feature>
<feature type="strand" evidence="38">
    <location>
        <begin position="1512"/>
        <end position="1518"/>
    </location>
</feature>
<feature type="turn" evidence="38">
    <location>
        <begin position="1519"/>
        <end position="1522"/>
    </location>
</feature>
<feature type="strand" evidence="38">
    <location>
        <begin position="1523"/>
        <end position="1528"/>
    </location>
</feature>
<feature type="turn" evidence="38">
    <location>
        <begin position="1529"/>
        <end position="1532"/>
    </location>
</feature>
<feature type="strand" evidence="38">
    <location>
        <begin position="1533"/>
        <end position="1538"/>
    </location>
</feature>
<feature type="strand" evidence="38">
    <location>
        <begin position="1545"/>
        <end position="1548"/>
    </location>
</feature>
<feature type="strand" evidence="38">
    <location>
        <begin position="1553"/>
        <end position="1561"/>
    </location>
</feature>
<feature type="turn" evidence="38">
    <location>
        <begin position="1564"/>
        <end position="1566"/>
    </location>
</feature>
<feature type="strand" evidence="38">
    <location>
        <begin position="1568"/>
        <end position="1573"/>
    </location>
</feature>
<feature type="strand" evidence="38">
    <location>
        <begin position="1575"/>
        <end position="1577"/>
    </location>
</feature>
<feature type="strand" evidence="38">
    <location>
        <begin position="1579"/>
        <end position="1584"/>
    </location>
</feature>
<feature type="strand" evidence="38">
    <location>
        <begin position="1591"/>
        <end position="1594"/>
    </location>
</feature>
<feature type="strand" evidence="38">
    <location>
        <begin position="1599"/>
        <end position="1607"/>
    </location>
</feature>
<feature type="turn" evidence="38">
    <location>
        <begin position="1608"/>
        <end position="1611"/>
    </location>
</feature>
<feature type="strand" evidence="38">
    <location>
        <begin position="1612"/>
        <end position="1617"/>
    </location>
</feature>
<feature type="turn" evidence="38">
    <location>
        <begin position="1618"/>
        <end position="1621"/>
    </location>
</feature>
<feature type="strand" evidence="38">
    <location>
        <begin position="1622"/>
        <end position="1627"/>
    </location>
</feature>
<feature type="strand" evidence="38">
    <location>
        <begin position="1634"/>
        <end position="1637"/>
    </location>
</feature>
<feature type="strand" evidence="38">
    <location>
        <begin position="1644"/>
        <end position="1652"/>
    </location>
</feature>
<feature type="strand" evidence="38">
    <location>
        <begin position="1655"/>
        <end position="1660"/>
    </location>
</feature>
<feature type="turn" evidence="38">
    <location>
        <begin position="1661"/>
        <end position="1664"/>
    </location>
</feature>
<feature type="strand" evidence="38">
    <location>
        <begin position="1665"/>
        <end position="1670"/>
    </location>
</feature>
<feature type="turn" evidence="38">
    <location>
        <begin position="1671"/>
        <end position="1673"/>
    </location>
</feature>
<feature type="strand" evidence="38">
    <location>
        <begin position="1678"/>
        <end position="1682"/>
    </location>
</feature>
<feature type="strand" evidence="38">
    <location>
        <begin position="1690"/>
        <end position="1693"/>
    </location>
</feature>
<feature type="helix" evidence="38">
    <location>
        <begin position="1695"/>
        <end position="1697"/>
    </location>
</feature>
<feature type="turn" evidence="36">
    <location>
        <begin position="1704"/>
        <end position="1707"/>
    </location>
</feature>
<feature type="strand" evidence="38">
    <location>
        <begin position="1711"/>
        <end position="1716"/>
    </location>
</feature>
<feature type="turn" evidence="38">
    <location>
        <begin position="1720"/>
        <end position="1722"/>
    </location>
</feature>
<feature type="strand" evidence="38">
    <location>
        <begin position="1723"/>
        <end position="1727"/>
    </location>
</feature>
<feature type="strand" evidence="38">
    <location>
        <begin position="1732"/>
        <end position="1734"/>
    </location>
</feature>
<feature type="strand" evidence="38">
    <location>
        <begin position="1741"/>
        <end position="1743"/>
    </location>
</feature>
<feature type="strand" evidence="38">
    <location>
        <begin position="1748"/>
        <end position="1755"/>
    </location>
</feature>
<feature type="strand" evidence="38">
    <location>
        <begin position="1757"/>
        <end position="1762"/>
    </location>
</feature>
<feature type="strand" evidence="38">
    <location>
        <begin position="1785"/>
        <end position="1787"/>
    </location>
</feature>
<feature type="helix" evidence="38">
    <location>
        <begin position="1789"/>
        <end position="1791"/>
    </location>
</feature>
<feature type="strand" evidence="38">
    <location>
        <begin position="1792"/>
        <end position="1797"/>
    </location>
</feature>
<feature type="turn" evidence="38">
    <location>
        <begin position="1798"/>
        <end position="1800"/>
    </location>
</feature>
<feature type="strand" evidence="38">
    <location>
        <begin position="1801"/>
        <end position="1806"/>
    </location>
</feature>
<feature type="strand" evidence="38">
    <location>
        <begin position="1813"/>
        <end position="1817"/>
    </location>
</feature>
<feature type="strand" evidence="38">
    <location>
        <begin position="1820"/>
        <end position="1822"/>
    </location>
</feature>
<feature type="strand" evidence="38">
    <location>
        <begin position="1827"/>
        <end position="1830"/>
    </location>
</feature>
<feature type="turn" evidence="38">
    <location>
        <begin position="1831"/>
        <end position="1834"/>
    </location>
</feature>
<feature type="strand" evidence="38">
    <location>
        <begin position="1835"/>
        <end position="1840"/>
    </location>
</feature>
<feature type="turn" evidence="38">
    <location>
        <begin position="1841"/>
        <end position="1844"/>
    </location>
</feature>
<feature type="strand" evidence="38">
    <location>
        <begin position="1845"/>
        <end position="1850"/>
    </location>
</feature>
<feature type="strand" evidence="38">
    <location>
        <begin position="1852"/>
        <end position="1855"/>
    </location>
</feature>
<feature type="strand" evidence="38">
    <location>
        <begin position="1858"/>
        <end position="1863"/>
    </location>
</feature>
<feature type="strand" evidence="38">
    <location>
        <begin position="1866"/>
        <end position="1870"/>
    </location>
</feature>
<feature type="strand" evidence="38">
    <location>
        <begin position="1872"/>
        <end position="1880"/>
    </location>
</feature>
<feature type="turn" evidence="38">
    <location>
        <begin position="1881"/>
        <end position="1884"/>
    </location>
</feature>
<feature type="strand" evidence="38">
    <location>
        <begin position="1885"/>
        <end position="1891"/>
    </location>
</feature>
<feature type="strand" evidence="38">
    <location>
        <begin position="1899"/>
        <end position="1905"/>
    </location>
</feature>
<feature type="strand" evidence="38">
    <location>
        <begin position="1912"/>
        <end position="1918"/>
    </location>
</feature>
<feature type="strand" evidence="38">
    <location>
        <begin position="1920"/>
        <end position="1928"/>
    </location>
</feature>
<feature type="turn" evidence="38">
    <location>
        <begin position="1929"/>
        <end position="1932"/>
    </location>
</feature>
<feature type="strand" evidence="38">
    <location>
        <begin position="1933"/>
        <end position="1938"/>
    </location>
</feature>
<feature type="turn" evidence="38">
    <location>
        <begin position="1939"/>
        <end position="1942"/>
    </location>
</feature>
<feature type="strand" evidence="38">
    <location>
        <begin position="1943"/>
        <end position="1948"/>
    </location>
</feature>
<feature type="strand" evidence="38">
    <location>
        <begin position="1955"/>
        <end position="1958"/>
    </location>
</feature>
<feature type="strand" evidence="38">
    <location>
        <begin position="1964"/>
        <end position="1970"/>
    </location>
</feature>
<feature type="strand" evidence="38">
    <location>
        <begin position="1973"/>
        <end position="1978"/>
    </location>
</feature>
<feature type="turn" evidence="38">
    <location>
        <begin position="1979"/>
        <end position="1982"/>
    </location>
</feature>
<feature type="strand" evidence="38">
    <location>
        <begin position="1983"/>
        <end position="1988"/>
    </location>
</feature>
<feature type="turn" evidence="38">
    <location>
        <begin position="1989"/>
        <end position="1992"/>
    </location>
</feature>
<feature type="strand" evidence="38">
    <location>
        <begin position="1996"/>
        <end position="1999"/>
    </location>
</feature>
<feature type="strand" evidence="38">
    <location>
        <begin position="2004"/>
        <end position="2011"/>
    </location>
</feature>
<feature type="helix" evidence="38">
    <location>
        <begin position="2017"/>
        <end position="2019"/>
    </location>
</feature>
<feature type="helix" evidence="38">
    <location>
        <begin position="2022"/>
        <end position="2025"/>
    </location>
</feature>
<feature type="strand" evidence="38">
    <location>
        <begin position="2030"/>
        <end position="2037"/>
    </location>
</feature>
<feature type="turn" evidence="38">
    <location>
        <begin position="2038"/>
        <end position="2040"/>
    </location>
</feature>
<feature type="strand" evidence="38">
    <location>
        <begin position="2041"/>
        <end position="2045"/>
    </location>
</feature>
<feature type="turn" evidence="36">
    <location>
        <begin position="2047"/>
        <end position="2049"/>
    </location>
</feature>
<feature type="strand" evidence="38">
    <location>
        <begin position="2050"/>
        <end position="2052"/>
    </location>
</feature>
<feature type="strand" evidence="38">
    <location>
        <begin position="2059"/>
        <end position="2061"/>
    </location>
</feature>
<feature type="strand" evidence="38">
    <location>
        <begin position="2064"/>
        <end position="2080"/>
    </location>
</feature>
<feature type="strand" evidence="38">
    <location>
        <begin position="2085"/>
        <end position="2088"/>
    </location>
</feature>
<feature type="strand" evidence="38">
    <location>
        <begin position="2091"/>
        <end position="2093"/>
    </location>
</feature>
<feature type="strand" evidence="38">
    <location>
        <begin position="2098"/>
        <end position="2104"/>
    </location>
</feature>
<feature type="turn" evidence="38">
    <location>
        <begin position="2105"/>
        <end position="2108"/>
    </location>
</feature>
<feature type="strand" evidence="38">
    <location>
        <begin position="2109"/>
        <end position="2114"/>
    </location>
</feature>
<feature type="strand" evidence="36">
    <location>
        <begin position="2117"/>
        <end position="2119"/>
    </location>
</feature>
<feature type="helix" evidence="38">
    <location>
        <begin position="2120"/>
        <end position="2122"/>
    </location>
</feature>
<feature type="strand" evidence="38">
    <location>
        <begin position="2124"/>
        <end position="2129"/>
    </location>
</feature>
<feature type="strand" evidence="38">
    <location>
        <begin position="2132"/>
        <end position="2139"/>
    </location>
</feature>
<feature type="strand" evidence="38">
    <location>
        <begin position="2145"/>
        <end position="2154"/>
    </location>
</feature>
<feature type="turn" evidence="38">
    <location>
        <begin position="2155"/>
        <end position="2158"/>
    </location>
</feature>
<feature type="strand" evidence="38">
    <location>
        <begin position="2159"/>
        <end position="2165"/>
    </location>
</feature>
<feature type="strand" evidence="38">
    <location>
        <begin position="2170"/>
        <end position="2176"/>
    </location>
</feature>
<feature type="strand" evidence="38">
    <location>
        <begin position="2182"/>
        <end position="2190"/>
    </location>
</feature>
<feature type="strand" evidence="38">
    <location>
        <begin position="2195"/>
        <end position="2199"/>
    </location>
</feature>
<feature type="turn" evidence="38">
    <location>
        <begin position="2200"/>
        <end position="2203"/>
    </location>
</feature>
<feature type="strand" evidence="38">
    <location>
        <begin position="2204"/>
        <end position="2208"/>
    </location>
</feature>
<feature type="strand" evidence="38">
    <location>
        <begin position="2211"/>
        <end position="2213"/>
    </location>
</feature>
<feature type="strand" evidence="38">
    <location>
        <begin position="2216"/>
        <end position="2219"/>
    </location>
</feature>
<feature type="strand" evidence="38">
    <location>
        <begin position="2227"/>
        <end position="2230"/>
    </location>
</feature>
<feature type="strand" evidence="38">
    <location>
        <begin position="2237"/>
        <end position="2242"/>
    </location>
</feature>
<feature type="turn" evidence="38">
    <location>
        <begin position="2244"/>
        <end position="2246"/>
    </location>
</feature>
<feature type="strand" evidence="38">
    <location>
        <begin position="2248"/>
        <end position="2253"/>
    </location>
</feature>
<feature type="turn" evidence="38">
    <location>
        <begin position="2254"/>
        <end position="2257"/>
    </location>
</feature>
<feature type="strand" evidence="38">
    <location>
        <begin position="2258"/>
        <end position="2263"/>
    </location>
</feature>
<feature type="strand" evidence="38">
    <location>
        <begin position="2269"/>
        <end position="2275"/>
    </location>
</feature>
<feature type="strand" evidence="38">
    <location>
        <begin position="2281"/>
        <end position="2287"/>
    </location>
</feature>
<feature type="strand" evidence="38">
    <location>
        <begin position="2290"/>
        <end position="2295"/>
    </location>
</feature>
<feature type="turn" evidence="38">
    <location>
        <begin position="2296"/>
        <end position="2299"/>
    </location>
</feature>
<feature type="strand" evidence="38">
    <location>
        <begin position="2300"/>
        <end position="2307"/>
    </location>
</feature>
<feature type="strand" evidence="38">
    <location>
        <begin position="2315"/>
        <end position="2319"/>
    </location>
</feature>
<feature type="strand" evidence="38">
    <location>
        <begin position="2322"/>
        <end position="2331"/>
    </location>
</feature>
<feature type="turn" evidence="38">
    <location>
        <begin position="2332"/>
        <end position="2334"/>
    </location>
</feature>
<feature type="turn" evidence="38">
    <location>
        <begin position="2339"/>
        <end position="2343"/>
    </location>
</feature>
<feature type="helix" evidence="38">
    <location>
        <begin position="2346"/>
        <end position="2348"/>
    </location>
</feature>
<feature type="helix" evidence="38">
    <location>
        <begin position="2350"/>
        <end position="2353"/>
    </location>
</feature>
<feature type="strand" evidence="38">
    <location>
        <begin position="2355"/>
        <end position="2359"/>
    </location>
</feature>
<feature type="strand" evidence="38">
    <location>
        <begin position="2368"/>
        <end position="2370"/>
    </location>
</feature>
<feature type="strand" evidence="38">
    <location>
        <begin position="2372"/>
        <end position="2376"/>
    </location>
</feature>
<feature type="strand" evidence="38">
    <location>
        <begin position="2390"/>
        <end position="2395"/>
    </location>
</feature>
<feature type="strand" evidence="38">
    <location>
        <begin position="2398"/>
        <end position="2402"/>
    </location>
</feature>
<feature type="strand" evidence="38">
    <location>
        <begin position="2411"/>
        <end position="2413"/>
    </location>
</feature>
<feature type="strand" evidence="38">
    <location>
        <begin position="2419"/>
        <end position="2428"/>
    </location>
</feature>
<feature type="turn" evidence="38">
    <location>
        <begin position="2429"/>
        <end position="2432"/>
    </location>
</feature>
<feature type="strand" evidence="38">
    <location>
        <begin position="2433"/>
        <end position="2440"/>
    </location>
</feature>
<feature type="turn" evidence="38">
    <location>
        <begin position="2441"/>
        <end position="2443"/>
    </location>
</feature>
<feature type="strand" evidence="38">
    <location>
        <begin position="2444"/>
        <end position="2451"/>
    </location>
</feature>
<feature type="strand" evidence="36">
    <location>
        <begin position="2453"/>
        <end position="2455"/>
    </location>
</feature>
<feature type="strand" evidence="38">
    <location>
        <begin position="2460"/>
        <end position="2463"/>
    </location>
</feature>
<feature type="strand" evidence="38">
    <location>
        <begin position="2469"/>
        <end position="2475"/>
    </location>
</feature>
<feature type="turn" evidence="38">
    <location>
        <begin position="2476"/>
        <end position="2479"/>
    </location>
</feature>
<feature type="strand" evidence="38">
    <location>
        <begin position="2480"/>
        <end position="2485"/>
    </location>
</feature>
<feature type="turn" evidence="38">
    <location>
        <begin position="2486"/>
        <end position="2489"/>
    </location>
</feature>
<feature type="strand" evidence="38">
    <location>
        <begin position="2490"/>
        <end position="2495"/>
    </location>
</feature>
<feature type="strand" evidence="38">
    <location>
        <begin position="2502"/>
        <end position="2506"/>
    </location>
</feature>
<feature type="strand" evidence="38">
    <location>
        <begin position="2508"/>
        <end position="2516"/>
    </location>
</feature>
<feature type="turn" evidence="38">
    <location>
        <begin position="2517"/>
        <end position="2520"/>
    </location>
</feature>
<feature type="strand" evidence="38">
    <location>
        <begin position="2521"/>
        <end position="2526"/>
    </location>
</feature>
<feature type="strand" evidence="38">
    <location>
        <begin position="2528"/>
        <end position="2530"/>
    </location>
</feature>
<feature type="strand" evidence="38">
    <location>
        <begin position="2532"/>
        <end position="2537"/>
    </location>
</feature>
<feature type="strand" evidence="38">
    <location>
        <begin position="2544"/>
        <end position="2547"/>
    </location>
</feature>
<feature type="strand" evidence="38">
    <location>
        <begin position="2556"/>
        <end position="2560"/>
    </location>
</feature>
<feature type="turn" evidence="38">
    <location>
        <begin position="2561"/>
        <end position="2564"/>
    </location>
</feature>
<feature type="strand" evidence="38">
    <location>
        <begin position="2565"/>
        <end position="2570"/>
    </location>
</feature>
<feature type="turn" evidence="38">
    <location>
        <begin position="2571"/>
        <end position="2574"/>
    </location>
</feature>
<feature type="strand" evidence="38">
    <location>
        <begin position="2575"/>
        <end position="2580"/>
    </location>
</feature>
<feature type="strand" evidence="38">
    <location>
        <begin position="2587"/>
        <end position="2591"/>
    </location>
</feature>
<feature type="strand" evidence="38">
    <location>
        <begin position="2595"/>
        <end position="2602"/>
    </location>
</feature>
<feature type="strand" evidence="38">
    <location>
        <begin position="2605"/>
        <end position="2610"/>
    </location>
</feature>
<feature type="turn" evidence="38">
    <location>
        <begin position="2611"/>
        <end position="2614"/>
    </location>
</feature>
<feature type="strand" evidence="38">
    <location>
        <begin position="2615"/>
        <end position="2620"/>
    </location>
</feature>
<feature type="turn" evidence="38">
    <location>
        <begin position="2621"/>
        <end position="2623"/>
    </location>
</feature>
<feature type="strand" evidence="38">
    <location>
        <begin position="2628"/>
        <end position="2631"/>
    </location>
</feature>
<feature type="strand" evidence="38">
    <location>
        <begin position="2638"/>
        <end position="2644"/>
    </location>
</feature>
<feature type="helix" evidence="38">
    <location>
        <begin position="2655"/>
        <end position="2657"/>
    </location>
</feature>
<feature type="helix" evidence="38">
    <location>
        <begin position="2659"/>
        <end position="2662"/>
    </location>
</feature>
<feature type="strand" evidence="38">
    <location>
        <begin position="2664"/>
        <end position="2669"/>
    </location>
</feature>
<feature type="strand" evidence="38">
    <location>
        <begin position="2671"/>
        <end position="2677"/>
    </location>
</feature>
<feature type="strand" evidence="38">
    <location>
        <begin position="2680"/>
        <end position="2682"/>
    </location>
</feature>
<feature type="strand" evidence="38">
    <location>
        <begin position="2684"/>
        <end position="2686"/>
    </location>
</feature>
<feature type="helix" evidence="38">
    <location>
        <begin position="2687"/>
        <end position="2690"/>
    </location>
</feature>
<feature type="strand" evidence="38">
    <location>
        <begin position="2692"/>
        <end position="2695"/>
    </location>
</feature>
<feature type="strand" evidence="38">
    <location>
        <begin position="2705"/>
        <end position="2707"/>
    </location>
</feature>
<feature type="helix" evidence="36">
    <location>
        <begin position="2709"/>
        <end position="2711"/>
    </location>
</feature>
<feature type="strand" evidence="38">
    <location>
        <begin position="2713"/>
        <end position="2715"/>
    </location>
</feature>
<feature type="helix" evidence="38">
    <location>
        <begin position="2716"/>
        <end position="2718"/>
    </location>
</feature>
<feature type="strand" evidence="36">
    <location>
        <begin position="2721"/>
        <end position="2723"/>
    </location>
</feature>
<feature type="strand" evidence="38">
    <location>
        <begin position="2727"/>
        <end position="2729"/>
    </location>
</feature>
<feature type="helix" evidence="38">
    <location>
        <begin position="2730"/>
        <end position="2732"/>
    </location>
</feature>
<feature type="helix" evidence="38">
    <location>
        <begin position="2734"/>
        <end position="2737"/>
    </location>
</feature>
<feature type="strand" evidence="38">
    <location>
        <begin position="2746"/>
        <end position="2748"/>
    </location>
</feature>
<feature type="strand" evidence="41">
    <location>
        <begin position="2750"/>
        <end position="2752"/>
    </location>
</feature>
<feature type="strand" evidence="41">
    <location>
        <begin position="2754"/>
        <end position="2756"/>
    </location>
</feature>
<feature type="helix" evidence="38">
    <location>
        <begin position="2757"/>
        <end position="2759"/>
    </location>
</feature>
<feature type="strand" evidence="38">
    <location>
        <begin position="2760"/>
        <end position="2764"/>
    </location>
</feature>
<feature type="strand" evidence="38">
    <location>
        <begin position="2767"/>
        <end position="2770"/>
    </location>
</feature>
<feature type="turn" evidence="38">
    <location>
        <begin position="2771"/>
        <end position="2773"/>
    </location>
</feature>
<feature type="helix" evidence="40">
    <location>
        <begin position="2783"/>
        <end position="2785"/>
    </location>
</feature>
<feature type="turn" evidence="41">
    <location>
        <begin position="2797"/>
        <end position="2801"/>
    </location>
</feature>
<feature type="strand" evidence="41">
    <location>
        <begin position="2802"/>
        <end position="2804"/>
    </location>
</feature>
<feature type="helix" evidence="41">
    <location>
        <begin position="2813"/>
        <end position="2816"/>
    </location>
</feature>
<feature type="strand" evidence="41">
    <location>
        <begin position="2833"/>
        <end position="2836"/>
    </location>
</feature>
<feature type="helix" evidence="40">
    <location>
        <begin position="2839"/>
        <end position="2841"/>
    </location>
</feature>
<feature type="strand" evidence="41">
    <location>
        <begin position="2843"/>
        <end position="2845"/>
    </location>
</feature>
<feature type="strand" evidence="41">
    <location>
        <begin position="2850"/>
        <end position="2852"/>
    </location>
</feature>
<feature type="turn" evidence="40">
    <location>
        <begin position="2853"/>
        <end position="2855"/>
    </location>
</feature>
<feature type="strand" evidence="40">
    <location>
        <begin position="2859"/>
        <end position="2862"/>
    </location>
</feature>
<feature type="strand" evidence="39">
    <location>
        <begin position="2869"/>
        <end position="2871"/>
    </location>
</feature>
<feature type="strand" evidence="39">
    <location>
        <begin position="2878"/>
        <end position="2880"/>
    </location>
</feature>
<feature type="turn" evidence="39">
    <location>
        <begin position="2881"/>
        <end position="2883"/>
    </location>
</feature>
<feature type="strand" evidence="39">
    <location>
        <begin position="2884"/>
        <end position="2888"/>
    </location>
</feature>
<feature type="strand" evidence="39">
    <location>
        <begin position="2896"/>
        <end position="2901"/>
    </location>
</feature>
<feature type="strand" evidence="39">
    <location>
        <begin position="2903"/>
        <end position="2906"/>
    </location>
</feature>
<feature type="strand" evidence="39">
    <location>
        <begin position="2912"/>
        <end position="2914"/>
    </location>
</feature>
<feature type="strand" evidence="39">
    <location>
        <begin position="2916"/>
        <end position="2918"/>
    </location>
</feature>
<feature type="helix" evidence="39">
    <location>
        <begin position="2924"/>
        <end position="2926"/>
    </location>
</feature>
<feature type="strand" evidence="39">
    <location>
        <begin position="2933"/>
        <end position="2936"/>
    </location>
</feature>
<feature type="helix" evidence="39">
    <location>
        <begin position="2937"/>
        <end position="2939"/>
    </location>
</feature>
<feature type="strand" evidence="39">
    <location>
        <begin position="2954"/>
        <end position="2956"/>
    </location>
</feature>
<feature type="turn" evidence="39">
    <location>
        <begin position="2962"/>
        <end position="2964"/>
    </location>
</feature>
<feature type="strand" evidence="39">
    <location>
        <begin position="2966"/>
        <end position="2969"/>
    </location>
</feature>
<feature type="helix" evidence="39">
    <location>
        <begin position="2970"/>
        <end position="2972"/>
    </location>
</feature>
<feature type="strand" evidence="39">
    <location>
        <begin position="2975"/>
        <end position="2977"/>
    </location>
</feature>
<feature type="strand" evidence="39">
    <location>
        <begin position="2980"/>
        <end position="2982"/>
    </location>
</feature>
<feature type="turn" evidence="39">
    <location>
        <begin position="2984"/>
        <end position="2990"/>
    </location>
</feature>
<feature type="strand" evidence="39">
    <location>
        <begin position="2999"/>
        <end position="3001"/>
    </location>
</feature>
<feature type="strand" evidence="39">
    <location>
        <begin position="3003"/>
        <end position="3005"/>
    </location>
</feature>
<feature type="helix" evidence="39">
    <location>
        <begin position="3010"/>
        <end position="3012"/>
    </location>
</feature>
<feature type="strand" evidence="39">
    <location>
        <begin position="3013"/>
        <end position="3017"/>
    </location>
</feature>
<feature type="strand" evidence="39">
    <location>
        <begin position="3020"/>
        <end position="3023"/>
    </location>
</feature>
<feature type="turn" evidence="39">
    <location>
        <begin position="3024"/>
        <end position="3028"/>
    </location>
</feature>
<feature type="strand" evidence="39">
    <location>
        <begin position="3038"/>
        <end position="3040"/>
    </location>
</feature>
<feature type="strand" evidence="39">
    <location>
        <begin position="3046"/>
        <end position="3048"/>
    </location>
</feature>
<feature type="helix" evidence="39">
    <location>
        <begin position="3049"/>
        <end position="3051"/>
    </location>
</feature>
<feature type="strand" evidence="39">
    <location>
        <begin position="3054"/>
        <end position="3056"/>
    </location>
</feature>
<feature type="strand" evidence="39">
    <location>
        <begin position="3058"/>
        <end position="3061"/>
    </location>
</feature>
<feature type="turn" evidence="39">
    <location>
        <begin position="3067"/>
        <end position="3070"/>
    </location>
</feature>
<feature type="turn" evidence="39">
    <location>
        <begin position="3085"/>
        <end position="3087"/>
    </location>
</feature>
<feature type="helix" evidence="39">
    <location>
        <begin position="3092"/>
        <end position="3094"/>
    </location>
</feature>
<feature type="strand" evidence="39">
    <location>
        <begin position="3105"/>
        <end position="3107"/>
    </location>
</feature>
<feature type="strand" evidence="39">
    <location>
        <begin position="3109"/>
        <end position="3111"/>
    </location>
</feature>
<feature type="strand" evidence="39">
    <location>
        <begin position="3115"/>
        <end position="3118"/>
    </location>
</feature>
<feature type="strand" evidence="39">
    <location>
        <begin position="3125"/>
        <end position="3130"/>
    </location>
</feature>
<feature type="strand" evidence="39">
    <location>
        <begin position="3135"/>
        <end position="3138"/>
    </location>
</feature>
<feature type="strand" evidence="39">
    <location>
        <begin position="3143"/>
        <end position="3145"/>
    </location>
</feature>
<feature type="strand" evidence="39">
    <location>
        <begin position="3152"/>
        <end position="3154"/>
    </location>
</feature>
<feature type="helix" evidence="39">
    <location>
        <begin position="3157"/>
        <end position="3160"/>
    </location>
</feature>
<feature type="helix" evidence="39">
    <location>
        <begin position="3162"/>
        <end position="3164"/>
    </location>
</feature>
<feature type="strand" evidence="39">
    <location>
        <begin position="3165"/>
        <end position="3171"/>
    </location>
</feature>
<feature type="strand" evidence="39">
    <location>
        <begin position="3173"/>
        <end position="3179"/>
    </location>
</feature>
<feature type="strand" evidence="39">
    <location>
        <begin position="3184"/>
        <end position="3186"/>
    </location>
</feature>
<feature type="strand" evidence="39">
    <location>
        <begin position="3193"/>
        <end position="3195"/>
    </location>
</feature>
<feature type="strand" evidence="39">
    <location>
        <begin position="3202"/>
        <end position="3206"/>
    </location>
</feature>
<feature type="strand" evidence="39">
    <location>
        <begin position="3211"/>
        <end position="3218"/>
    </location>
</feature>
<feature type="strand" evidence="39">
    <location>
        <begin position="3221"/>
        <end position="3225"/>
    </location>
</feature>
<feature type="strand" evidence="39">
    <location>
        <begin position="3231"/>
        <end position="3237"/>
    </location>
</feature>
<feature type="turn" evidence="39">
    <location>
        <begin position="3238"/>
        <end position="3241"/>
    </location>
</feature>
<feature type="strand" evidence="39">
    <location>
        <begin position="3242"/>
        <end position="3247"/>
    </location>
</feature>
<feature type="turn" evidence="39">
    <location>
        <begin position="3248"/>
        <end position="3251"/>
    </location>
</feature>
<feature type="strand" evidence="39">
    <location>
        <begin position="3252"/>
        <end position="3257"/>
    </location>
</feature>
<feature type="strand" evidence="39">
    <location>
        <begin position="3264"/>
        <end position="3267"/>
    </location>
</feature>
<feature type="strand" evidence="39">
    <location>
        <begin position="3274"/>
        <end position="3280"/>
    </location>
</feature>
<feature type="turn" evidence="39">
    <location>
        <begin position="3281"/>
        <end position="3284"/>
    </location>
</feature>
<feature type="strand" evidence="39">
    <location>
        <begin position="3285"/>
        <end position="3290"/>
    </location>
</feature>
<feature type="turn" evidence="39">
    <location>
        <begin position="3291"/>
        <end position="3294"/>
    </location>
</feature>
<feature type="strand" evidence="39">
    <location>
        <begin position="3295"/>
        <end position="3300"/>
    </location>
</feature>
<feature type="strand" evidence="39">
    <location>
        <begin position="3307"/>
        <end position="3313"/>
    </location>
</feature>
<feature type="strand" evidence="39">
    <location>
        <begin position="3323"/>
        <end position="3331"/>
    </location>
</feature>
<feature type="turn" evidence="39">
    <location>
        <begin position="3332"/>
        <end position="3335"/>
    </location>
</feature>
<feature type="strand" evidence="39">
    <location>
        <begin position="3336"/>
        <end position="3341"/>
    </location>
</feature>
<feature type="strand" evidence="39">
    <location>
        <begin position="3347"/>
        <end position="3352"/>
    </location>
</feature>
<feature type="strand" evidence="39">
    <location>
        <begin position="3359"/>
        <end position="3362"/>
    </location>
</feature>
<feature type="strand" evidence="39">
    <location>
        <begin position="3371"/>
        <end position="3374"/>
    </location>
</feature>
<feature type="strand" evidence="39">
    <location>
        <begin position="3376"/>
        <end position="3378"/>
    </location>
</feature>
<feature type="strand" evidence="39">
    <location>
        <begin position="3381"/>
        <end position="3384"/>
    </location>
</feature>
<feature type="turn" evidence="39">
    <location>
        <begin position="3386"/>
        <end position="3388"/>
    </location>
</feature>
<feature type="strand" evidence="39">
    <location>
        <begin position="3391"/>
        <end position="3394"/>
    </location>
</feature>
<feature type="strand" evidence="39">
    <location>
        <begin position="3402"/>
        <end position="3405"/>
    </location>
</feature>
<feature type="strand" evidence="39">
    <location>
        <begin position="3412"/>
        <end position="3418"/>
    </location>
</feature>
<feature type="strand" evidence="39">
    <location>
        <begin position="3421"/>
        <end position="3426"/>
    </location>
</feature>
<feature type="turn" evidence="39">
    <location>
        <begin position="3427"/>
        <end position="3430"/>
    </location>
</feature>
<feature type="strand" evidence="39">
    <location>
        <begin position="3431"/>
        <end position="3436"/>
    </location>
</feature>
<feature type="turn" evidence="39">
    <location>
        <begin position="3437"/>
        <end position="3439"/>
    </location>
</feature>
<feature type="strand" evidence="39">
    <location>
        <begin position="3444"/>
        <end position="3448"/>
    </location>
</feature>
<feature type="strand" evidence="39">
    <location>
        <begin position="3454"/>
        <end position="3459"/>
    </location>
</feature>
<feature type="helix" evidence="39">
    <location>
        <begin position="3461"/>
        <end position="3463"/>
    </location>
</feature>
<feature type="turn" evidence="39">
    <location>
        <begin position="3470"/>
        <end position="3474"/>
    </location>
</feature>
<feature type="helix" evidence="39">
    <location>
        <begin position="3475"/>
        <end position="3477"/>
    </location>
</feature>
<feature type="strand" evidence="39">
    <location>
        <begin position="3479"/>
        <end position="3484"/>
    </location>
</feature>
<feature type="strand" evidence="39">
    <location>
        <begin position="3491"/>
        <end position="3494"/>
    </location>
</feature>
<feature type="strand" evidence="39">
    <location>
        <begin position="3499"/>
        <end position="3503"/>
    </location>
</feature>
<feature type="strand" evidence="39">
    <location>
        <begin position="3505"/>
        <end position="3512"/>
    </location>
</feature>
<feature type="strand" evidence="39">
    <location>
        <begin position="3518"/>
        <end position="3520"/>
    </location>
</feature>
<feature type="strand" evidence="39">
    <location>
        <begin position="3527"/>
        <end position="3529"/>
    </location>
</feature>
<feature type="helix" evidence="39">
    <location>
        <begin position="3530"/>
        <end position="3532"/>
    </location>
</feature>
<feature type="strand" evidence="39">
    <location>
        <begin position="3533"/>
        <end position="3537"/>
    </location>
</feature>
<feature type="strand" evidence="39">
    <location>
        <begin position="3540"/>
        <end position="3543"/>
    </location>
</feature>
<feature type="helix" evidence="39">
    <location>
        <begin position="3570"/>
        <end position="3572"/>
    </location>
</feature>
<feature type="strand" evidence="39">
    <location>
        <begin position="3575"/>
        <end position="3577"/>
    </location>
</feature>
<feature type="strand" evidence="39">
    <location>
        <begin position="3580"/>
        <end position="3582"/>
    </location>
</feature>
<feature type="helix" evidence="39">
    <location>
        <begin position="3584"/>
        <end position="3586"/>
    </location>
</feature>
<feature type="helix" evidence="39">
    <location>
        <begin position="3588"/>
        <end position="3591"/>
    </location>
</feature>
<feature type="strand" evidence="39">
    <location>
        <begin position="3600"/>
        <end position="3602"/>
    </location>
</feature>
<feature type="strand" evidence="39">
    <location>
        <begin position="3608"/>
        <end position="3610"/>
    </location>
</feature>
<feature type="strand" evidence="39">
    <location>
        <begin position="3614"/>
        <end position="3618"/>
    </location>
</feature>
<feature type="strand" evidence="39">
    <location>
        <begin position="3624"/>
        <end position="3627"/>
    </location>
</feature>
<feature type="helix" evidence="39">
    <location>
        <begin position="3631"/>
        <end position="3634"/>
    </location>
</feature>
<feature type="strand" evidence="39">
    <location>
        <begin position="3641"/>
        <end position="3643"/>
    </location>
</feature>
<feature type="strand" evidence="39">
    <location>
        <begin position="3649"/>
        <end position="3651"/>
    </location>
</feature>
<feature type="helix" evidence="39">
    <location>
        <begin position="3652"/>
        <end position="3654"/>
    </location>
</feature>
<feature type="strand" evidence="39">
    <location>
        <begin position="3657"/>
        <end position="3659"/>
    </location>
</feature>
<feature type="strand" evidence="39">
    <location>
        <begin position="3662"/>
        <end position="3665"/>
    </location>
</feature>
<feature type="helix" evidence="39">
    <location>
        <begin position="3670"/>
        <end position="3673"/>
    </location>
</feature>
<feature type="helix" evidence="39">
    <location>
        <begin position="3676"/>
        <end position="3678"/>
    </location>
</feature>
<feature type="turn" evidence="39">
    <location>
        <begin position="3682"/>
        <end position="3684"/>
    </location>
</feature>
<feature type="strand" evidence="39">
    <location>
        <begin position="3685"/>
        <end position="3687"/>
    </location>
</feature>
<feature type="strand" evidence="39">
    <location>
        <begin position="3689"/>
        <end position="3692"/>
    </location>
</feature>
<feature type="strand" evidence="39">
    <location>
        <begin position="3694"/>
        <end position="3696"/>
    </location>
</feature>
<feature type="helix" evidence="39">
    <location>
        <begin position="3697"/>
        <end position="3699"/>
    </location>
</feature>
<feature type="strand" evidence="39">
    <location>
        <begin position="3702"/>
        <end position="3704"/>
    </location>
</feature>
<feature type="strand" evidence="39">
    <location>
        <begin position="3707"/>
        <end position="3710"/>
    </location>
</feature>
<feature type="helix" evidence="39">
    <location>
        <begin position="3711"/>
        <end position="3713"/>
    </location>
</feature>
<feature type="helix" evidence="39">
    <location>
        <begin position="3716"/>
        <end position="3718"/>
    </location>
</feature>
<feature type="turn" evidence="39">
    <location>
        <begin position="3723"/>
        <end position="3725"/>
    </location>
</feature>
<feature type="strand" evidence="39">
    <location>
        <begin position="3726"/>
        <end position="3728"/>
    </location>
</feature>
<feature type="strand" evidence="39">
    <location>
        <begin position="3730"/>
        <end position="3732"/>
    </location>
</feature>
<feature type="strand" evidence="39">
    <location>
        <begin position="3734"/>
        <end position="3736"/>
    </location>
</feature>
<feature type="helix" evidence="39">
    <location>
        <begin position="3737"/>
        <end position="3739"/>
    </location>
</feature>
<feature type="strand" evidence="39">
    <location>
        <begin position="3742"/>
        <end position="3744"/>
    </location>
</feature>
<feature type="strand" evidence="39">
    <location>
        <begin position="3747"/>
        <end position="3750"/>
    </location>
</feature>
<feature type="turn" evidence="39">
    <location>
        <begin position="3751"/>
        <end position="3753"/>
    </location>
</feature>
<feature type="strand" evidence="39">
    <location>
        <begin position="3765"/>
        <end position="3767"/>
    </location>
</feature>
<feature type="strand" evidence="39">
    <location>
        <begin position="3773"/>
        <end position="3775"/>
    </location>
</feature>
<feature type="helix" evidence="39">
    <location>
        <begin position="3776"/>
        <end position="3778"/>
    </location>
</feature>
<feature type="strand" evidence="39">
    <location>
        <begin position="3781"/>
        <end position="3783"/>
    </location>
</feature>
<feature type="strand" evidence="39">
    <location>
        <begin position="3786"/>
        <end position="3789"/>
    </location>
</feature>
<feature type="helix" evidence="39">
    <location>
        <begin position="3790"/>
        <end position="3792"/>
    </location>
</feature>
<feature type="strand" evidence="39">
    <location>
        <begin position="3801"/>
        <end position="3806"/>
    </location>
</feature>
<feature type="strand" evidence="39">
    <location>
        <begin position="3812"/>
        <end position="3814"/>
    </location>
</feature>
<feature type="helix" evidence="39">
    <location>
        <begin position="3815"/>
        <end position="3817"/>
    </location>
</feature>
<feature type="strand" evidence="39">
    <location>
        <begin position="3818"/>
        <end position="3822"/>
    </location>
</feature>
<feature type="turn" evidence="39">
    <location>
        <begin position="3829"/>
        <end position="3831"/>
    </location>
</feature>
<feature type="strand" evidence="39">
    <location>
        <begin position="3848"/>
        <end position="3850"/>
    </location>
</feature>
<feature type="helix" evidence="39">
    <location>
        <begin position="3859"/>
        <end position="3861"/>
    </location>
</feature>
<feature type="strand" evidence="39">
    <location>
        <begin position="3864"/>
        <end position="3866"/>
    </location>
</feature>
<feature type="helix" evidence="39">
    <location>
        <begin position="3873"/>
        <end position="3875"/>
    </location>
</feature>
<feature type="helix" evidence="39">
    <location>
        <begin position="3877"/>
        <end position="3881"/>
    </location>
</feature>
<feature type="turn" evidence="39">
    <location>
        <begin position="3887"/>
        <end position="3889"/>
    </location>
</feature>
<feature type="strand" evidence="39">
    <location>
        <begin position="3890"/>
        <end position="3893"/>
    </location>
</feature>
<feature type="turn" evidence="39">
    <location>
        <begin position="3894"/>
        <end position="3896"/>
    </location>
</feature>
<feature type="strand" evidence="39">
    <location>
        <begin position="3897"/>
        <end position="3900"/>
    </location>
</feature>
<feature type="helix" evidence="39">
    <location>
        <begin position="3901"/>
        <end position="3903"/>
    </location>
</feature>
<feature type="strand" evidence="39">
    <location>
        <begin position="3906"/>
        <end position="3908"/>
    </location>
</feature>
<feature type="helix" evidence="39">
    <location>
        <begin position="3915"/>
        <end position="3917"/>
    </location>
</feature>
<feature type="helix" evidence="39">
    <location>
        <begin position="3919"/>
        <end position="3921"/>
    </location>
</feature>
<feature type="strand" evidence="37">
    <location>
        <begin position="3932"/>
        <end position="3935"/>
    </location>
</feature>
<feature type="turn" evidence="37">
    <location>
        <begin position="3937"/>
        <end position="3939"/>
    </location>
</feature>
<feature type="helix" evidence="37">
    <location>
        <begin position="3945"/>
        <end position="3947"/>
    </location>
</feature>
<feature type="strand" evidence="37">
    <location>
        <begin position="3950"/>
        <end position="3952"/>
    </location>
</feature>
<feature type="strand" evidence="37">
    <location>
        <begin position="3955"/>
        <end position="3958"/>
    </location>
</feature>
<feature type="helix" evidence="37">
    <location>
        <begin position="3959"/>
        <end position="3961"/>
    </location>
</feature>
<feature type="helix" evidence="37">
    <location>
        <begin position="3972"/>
        <end position="3974"/>
    </location>
</feature>
<feature type="strand" evidence="37">
    <location>
        <begin position="3977"/>
        <end position="3979"/>
    </location>
</feature>
<feature type="strand" evidence="37">
    <location>
        <begin position="3981"/>
        <end position="3983"/>
    </location>
</feature>
<feature type="strand" evidence="37">
    <location>
        <begin position="3985"/>
        <end position="3991"/>
    </location>
</feature>
<feature type="strand" evidence="37">
    <location>
        <begin position="3997"/>
        <end position="3999"/>
    </location>
</feature>
<feature type="strand" evidence="37">
    <location>
        <begin position="4001"/>
        <end position="4003"/>
    </location>
</feature>
<feature type="strand" evidence="37">
    <location>
        <begin position="4007"/>
        <end position="4009"/>
    </location>
</feature>
<feature type="helix" evidence="37">
    <location>
        <begin position="4012"/>
        <end position="4014"/>
    </location>
</feature>
<feature type="strand" evidence="37">
    <location>
        <begin position="4018"/>
        <end position="4021"/>
    </location>
</feature>
<feature type="strand" evidence="37">
    <location>
        <begin position="4024"/>
        <end position="4026"/>
    </location>
</feature>
<feature type="strand" evidence="37">
    <location>
        <begin position="4029"/>
        <end position="4031"/>
    </location>
</feature>
<feature type="strand" evidence="37">
    <location>
        <begin position="4040"/>
        <end position="4043"/>
    </location>
</feature>
<feature type="strand" evidence="37">
    <location>
        <begin position="4046"/>
        <end position="4049"/>
    </location>
</feature>
<feature type="strand" evidence="37">
    <location>
        <begin position="4052"/>
        <end position="4054"/>
    </location>
</feature>
<feature type="strand" evidence="37">
    <location>
        <begin position="4057"/>
        <end position="4061"/>
    </location>
</feature>
<feature type="strand" evidence="37">
    <location>
        <begin position="4066"/>
        <end position="4070"/>
    </location>
</feature>
<feature type="turn" evidence="37">
    <location>
        <begin position="4071"/>
        <end position="4074"/>
    </location>
</feature>
<feature type="strand" evidence="37">
    <location>
        <begin position="4075"/>
        <end position="4077"/>
    </location>
</feature>
<feature type="strand" evidence="37">
    <location>
        <begin position="4085"/>
        <end position="4092"/>
    </location>
</feature>
<feature type="strand" evidence="37">
    <location>
        <begin position="4097"/>
        <end position="4107"/>
    </location>
</feature>
<feature type="strand" evidence="37">
    <location>
        <begin position="4116"/>
        <end position="4126"/>
    </location>
</feature>
<feature type="strand" evidence="37">
    <location>
        <begin position="4129"/>
        <end position="4131"/>
    </location>
</feature>
<feature type="strand" evidence="37">
    <location>
        <begin position="4146"/>
        <end position="4152"/>
    </location>
</feature>
<feature type="turn" evidence="37">
    <location>
        <begin position="4153"/>
        <end position="4156"/>
    </location>
</feature>
<feature type="strand" evidence="37">
    <location>
        <begin position="4157"/>
        <end position="4162"/>
    </location>
</feature>
<feature type="turn" evidence="37">
    <location>
        <begin position="4163"/>
        <end position="4166"/>
    </location>
</feature>
<feature type="strand" evidence="37">
    <location>
        <begin position="4167"/>
        <end position="4172"/>
    </location>
</feature>
<feature type="strand" evidence="37">
    <location>
        <begin position="4179"/>
        <end position="4182"/>
    </location>
</feature>
<feature type="strand" evidence="37">
    <location>
        <begin position="4187"/>
        <end position="4195"/>
    </location>
</feature>
<feature type="turn" evidence="37">
    <location>
        <begin position="4196"/>
        <end position="4199"/>
    </location>
</feature>
<feature type="strand" evidence="37">
    <location>
        <begin position="4200"/>
        <end position="4205"/>
    </location>
</feature>
<feature type="strand" evidence="37">
    <location>
        <begin position="4207"/>
        <end position="4209"/>
    </location>
</feature>
<feature type="strand" evidence="37">
    <location>
        <begin position="4211"/>
        <end position="4216"/>
    </location>
</feature>
<feature type="strand" evidence="37">
    <location>
        <begin position="4223"/>
        <end position="4226"/>
    </location>
</feature>
<feature type="strand" evidence="37">
    <location>
        <begin position="4233"/>
        <end position="4239"/>
    </location>
</feature>
<feature type="turn" evidence="37">
    <location>
        <begin position="4240"/>
        <end position="4244"/>
    </location>
</feature>
<feature type="strand" evidence="37">
    <location>
        <begin position="4245"/>
        <end position="4250"/>
    </location>
</feature>
<feature type="turn" evidence="37">
    <location>
        <begin position="4251"/>
        <end position="4254"/>
    </location>
</feature>
<feature type="strand" evidence="37">
    <location>
        <begin position="4255"/>
        <end position="4259"/>
    </location>
</feature>
<feature type="strand" evidence="37">
    <location>
        <begin position="4267"/>
        <end position="4271"/>
    </location>
</feature>
<feature type="strand" evidence="37">
    <location>
        <begin position="4274"/>
        <end position="4282"/>
    </location>
</feature>
<feature type="strand" evidence="37">
    <location>
        <begin position="4285"/>
        <end position="4290"/>
    </location>
</feature>
<feature type="turn" evidence="37">
    <location>
        <begin position="4291"/>
        <end position="4294"/>
    </location>
</feature>
<feature type="strand" evidence="37">
    <location>
        <begin position="4295"/>
        <end position="4300"/>
    </location>
</feature>
<feature type="strand" evidence="37">
    <location>
        <begin position="4308"/>
        <end position="4312"/>
    </location>
</feature>
<feature type="strand" evidence="37">
    <location>
        <begin position="4321"/>
        <end position="4323"/>
    </location>
</feature>
<feature type="strand" evidence="37">
    <location>
        <begin position="4341"/>
        <end position="4347"/>
    </location>
</feature>
<feature type="strand" evidence="37">
    <location>
        <begin position="4350"/>
        <end position="4354"/>
    </location>
</feature>
<feature type="strand" evidence="37">
    <location>
        <begin position="4369"/>
        <end position="4371"/>
    </location>
</feature>
<feature type="strand" evidence="37">
    <location>
        <begin position="4386"/>
        <end position="4388"/>
    </location>
</feature>
<feature type="strand" evidence="37">
    <location>
        <begin position="4390"/>
        <end position="4393"/>
    </location>
</feature>
<feature type="strand" evidence="37">
    <location>
        <begin position="4399"/>
        <end position="4402"/>
    </location>
</feature>
<feature type="turn" evidence="37">
    <location>
        <begin position="4409"/>
        <end position="4412"/>
    </location>
</feature>
<reference key="1">
    <citation type="journal article" date="1994" name="Proc. Natl. Acad. Sci. U.S.A.">
        <title>Complete cloning and sequencing of rat gp330/'megalin,' a distinctive member of the low density lipoprotein receptor gene family.</title>
        <authorList>
            <person name="Saito A."/>
            <person name="Pietromonaco S."/>
            <person name="Loo A.K.C."/>
            <person name="Farquhar M.G."/>
        </authorList>
    </citation>
    <scope>NUCLEOTIDE SEQUENCE [MRNA]</scope>
    <source>
        <strain>Sprague-Dawley</strain>
        <tissue>Kidney</tissue>
    </source>
</reference>
<reference key="2">
    <citation type="journal article" date="1982" name="Proc. Natl. Acad. Sci. U.S.A.">
        <title>The pathogenic antigen of Heymann nephritis is a membrane glycoprotein of the renal proximal tubule brush border.</title>
        <authorList>
            <person name="Kerjaschki D."/>
            <person name="Farquhar M.G."/>
        </authorList>
    </citation>
    <scope>SUBCELLULAR LOCATION</scope>
</reference>
<reference key="3">
    <citation type="journal article" date="1992" name="J. Biol. Chem.">
        <title>The 39-kDa receptor-associated protein interacts with two members of the low density lipoprotein receptor family, alpha 2-macroglobulin receptor and glycoprotein 330.</title>
        <authorList>
            <person name="Kounnas M.Z."/>
            <person name="Argraves W.S."/>
            <person name="Strickland D.K."/>
        </authorList>
    </citation>
    <scope>INTERACTION WITH LRPAP1</scope>
</reference>
<reference key="4">
    <citation type="journal article" date="1994" name="J. Histochem. Cytochem.">
        <title>Organ distribution in rats of two members of the low-density lipoprotein receptor gene family, gp330 and LRP/alpa 2MR, and the receptor-associated protein (RAP).</title>
        <authorList>
            <person name="Zheng G."/>
            <person name="Bachinsky D.R."/>
            <person name="Stamenkovic I."/>
            <person name="Strickland D.K."/>
            <person name="Brown D."/>
            <person name="Andres G."/>
            <person name="McCluskey R.T."/>
        </authorList>
    </citation>
    <scope>TISSUE SPECIFICITY</scope>
</reference>
<reference key="5">
    <citation type="journal article" date="1995" name="J. Clin. Invest.">
        <title>Evidence that epithelial glycoprotein 330/megalin mediates uptake of polybasic drugs.</title>
        <authorList>
            <person name="Moestrup S.K."/>
            <person name="Cui S."/>
            <person name="Vorum H."/>
            <person name="Bregengaard C."/>
            <person name="Bjorn S.E."/>
            <person name="Norris K."/>
            <person name="Gliemann J."/>
            <person name="Christensen E.I."/>
        </authorList>
    </citation>
    <scope>FUNCTION IN UPTAKE OF POLYBASIC DRUGS</scope>
</reference>
<reference key="6">
    <citation type="journal article" date="2002" name="J. Biol. Chem.">
        <title>Megalin functions as an endocytic sonic hedgehog receptor.</title>
        <authorList>
            <person name="McCarthy R.A."/>
            <person name="Barth J.L."/>
            <person name="Chintalapudi M.R."/>
            <person name="Knaak C."/>
            <person name="Argraves W.S."/>
        </authorList>
    </citation>
    <scope>FUNCTION</scope>
</reference>
<reference key="7">
    <citation type="journal article" date="2003" name="Am. J. Physiol.">
        <title>Identification of an apical sorting determinant in the cytoplasmic tail of megalin.</title>
        <authorList>
            <person name="Takeda T."/>
            <person name="Yamazaki H."/>
            <person name="Farquhar M.G."/>
        </authorList>
    </citation>
    <scope>SUBCELLULAR LOCATION</scope>
    <scope>DOMAIN</scope>
</reference>
<reference key="8">
    <citation type="journal article" date="2003" name="Am. J. Physiol.">
        <title>Renal uptake of myoglobin is mediated by the endocytic receptors megalin and cubilin.</title>
        <authorList>
            <person name="Gburek J."/>
            <person name="Birn H."/>
            <person name="Verroust P.J."/>
            <person name="Goj B."/>
            <person name="Jacobsen C."/>
            <person name="Moestrup S.K."/>
            <person name="Willnow T.E."/>
            <person name="Christensen E.I."/>
        </authorList>
    </citation>
    <scope>FUNCTION</scope>
    <scope>INTERACTION WITH MB</scope>
    <scope>SUBCELLULAR LOCATION</scope>
</reference>
<reference key="9">
    <citation type="journal article" date="2004" name="Am. J. Physiol.">
        <title>Megalin mediates renal uptake of heavy metal metallothionein complexes.</title>
        <authorList>
            <person name="Klassen R.B."/>
            <person name="Crenshaw K."/>
            <person name="Kozyraki R."/>
            <person name="Verroust P.J."/>
            <person name="Tio L."/>
            <person name="Atrian S."/>
            <person name="Allen P.L."/>
            <person name="Hammond T.G."/>
        </authorList>
    </citation>
    <scope>FUNCTION</scope>
</reference>
<reference key="10">
    <citation type="journal article" date="2005" name="Am. J. Physiol.">
        <title>Megalin binds and internalizes angiotensin II.</title>
        <authorList>
            <person name="Gonzalez-Villalobos R."/>
            <person name="Klassen R.B."/>
            <person name="Allen P.L."/>
            <person name="Navar L.G."/>
            <person name="Hammond T.G."/>
        </authorList>
    </citation>
    <scope>FUNCTION</scope>
</reference>
<reference key="11">
    <citation type="journal article" date="2005" name="Cell">
        <title>Role of endocytosis in cellular uptake of sex steroids.</title>
        <authorList>
            <person name="Hammes A."/>
            <person name="Andreassen T.K."/>
            <person name="Spoelgen R."/>
            <person name="Raila J."/>
            <person name="Hubner N."/>
            <person name="Schulz H."/>
            <person name="Metzger J."/>
            <person name="Schweigert F.J."/>
            <person name="Luppa P.B."/>
            <person name="Nykjaer A."/>
            <person name="Willnow T.E."/>
        </authorList>
    </citation>
    <scope>FUNCTION</scope>
    <scope>INTERACTION WITH SHBG</scope>
</reference>
<reference key="12">
    <citation type="journal article" date="2006" name="Am. J. Physiol.">
        <title>Megalin binds and internalizes angiotensin-(1-7).</title>
        <authorList>
            <person name="Gonzalez-Villalobos R."/>
            <person name="Klassen R.B."/>
            <person name="Allen P.L."/>
            <person name="Johanson K."/>
            <person name="Baker C.B."/>
            <person name="Kobori H."/>
            <person name="Navar L.G."/>
            <person name="Hammond T.G."/>
        </authorList>
    </citation>
    <scope>FUNCTION</scope>
</reference>
<reference key="13">
    <citation type="journal article" date="2006" name="Cell Struct. Funct.">
        <title>Soluble megalin is accumulated in the lumen of the rat endolymphatic sac.</title>
        <authorList>
            <person name="Ishida T."/>
            <person name="Hatae T."/>
            <person name="Nishi N."/>
            <person name="Araki N."/>
        </authorList>
    </citation>
    <scope>SUBCELLULAR LOCATION</scope>
    <scope>TISSUE SPECIFICITY</scope>
</reference>
<reference key="14">
    <citation type="journal article" date="2006" name="J. Histochem. Cytochem.">
        <title>Epithelial trafficking of Sonic hedgehog by megalin.</title>
        <authorList>
            <person name="Morales C.R."/>
            <person name="Zeng J."/>
            <person name="El Alfy M."/>
            <person name="Barth J.L."/>
            <person name="Chintalapudi M.R."/>
            <person name="McCarthy R.A."/>
            <person name="Incardona J.P."/>
            <person name="Argraves W.S."/>
        </authorList>
    </citation>
    <scope>FUNCTION</scope>
</reference>
<reference key="15">
    <citation type="journal article" date="2006" name="Mol. Endocrinol.">
        <title>Megalin is a receptor for apolipoprotein M, and kidney-specific megalin-deficiency confers urinary excretion of apolipoprotein M.</title>
        <authorList>
            <person name="Faber K."/>
            <person name="Hvidberg V."/>
            <person name="Moestrup S.K."/>
            <person name="Dahlbaeck B."/>
            <person name="Nielsen L.B."/>
        </authorList>
    </citation>
    <scope>FUNCTION</scope>
</reference>
<reference key="16">
    <citation type="journal article" date="2007" name="Biochem. Biophys. Res. Commun.">
        <title>Megalin-mediated endocytosis of cystatin C in proximal tubule cells.</title>
        <authorList>
            <person name="Kaseda R."/>
            <person name="Iino N."/>
            <person name="Hosojima M."/>
            <person name="Takeda T."/>
            <person name="Hosaka K."/>
            <person name="Kobayashi A."/>
            <person name="Yamamoto K."/>
            <person name="Suzuki A."/>
            <person name="Kasai A."/>
            <person name="Suzuki Y."/>
            <person name="Gejyo F."/>
            <person name="Saito A."/>
        </authorList>
    </citation>
    <scope>FUNCTION</scope>
    <scope>INTERACTION WITH CST3</scope>
</reference>
<reference key="17">
    <citation type="journal article" date="2008" name="FASEB J.">
        <title>Estrogen and the inner ear: megalin knockout mice suffer progressive hearing loss.</title>
        <authorList>
            <person name="Koenig O."/>
            <person name="Ruettiger L."/>
            <person name="Mueller M."/>
            <person name="Zimmermann U."/>
            <person name="Erdmann B."/>
            <person name="Kalbacher H."/>
            <person name="Gross M."/>
            <person name="Knipper M."/>
        </authorList>
    </citation>
    <scope>FUNCTION</scope>
</reference>
<reference key="18">
    <citation type="journal article" date="2008" name="J. Neurochem.">
        <title>Megalin is a receptor for albumin in astrocytes and is required for the synthesis of the neurotrophic factor oleic acid.</title>
        <authorList>
            <person name="Bento-Abreu A."/>
            <person name="Velasco A."/>
            <person name="Polo-Hernandez E."/>
            <person name="Perez-Reyes P.L."/>
            <person name="Tabernero A."/>
            <person name="Medina J.M."/>
        </authorList>
    </citation>
    <scope>FUNCTION</scope>
    <scope>INTERACTION WITH ALB</scope>
    <scope>SUBCELLULAR LOCATION</scope>
    <scope>TISSUE SPECIFICITY</scope>
    <scope>DEVELOPMENTAL STAGE</scope>
</reference>
<reference key="19">
    <citation type="journal article" date="2008" name="Neurobiol. Aging">
        <title>Megalin mediates the transport of leptin across the blood-CSF barrier.</title>
        <authorList>
            <person name="Dietrich M.O."/>
            <person name="Spuch C."/>
            <person name="Antequera D."/>
            <person name="Rodal I."/>
            <person name="de Yebenes J.G."/>
            <person name="Molina J.A."/>
            <person name="Bermejo F."/>
            <person name="Carro E."/>
        </authorList>
    </citation>
    <scope>FUNCTION</scope>
    <scope>INTERACTION WITH LEP</scope>
    <scope>TISSUE SPECIFICITY</scope>
</reference>
<reference key="20">
    <citation type="journal article" date="2009" name="Audiol. Neurootol.">
        <title>Cubilin and megalin co-localize in the neonatal inner ear.</title>
        <authorList>
            <person name="Tauris J."/>
            <person name="Christensen E.I."/>
            <person name="Nykjaer A."/>
            <person name="Jacobsen C."/>
            <person name="Petersen C.M."/>
            <person name="Ovesen T."/>
        </authorList>
    </citation>
    <scope>FUNCTION</scope>
    <scope>SUBCELLULAR LOCATION</scope>
    <scope>TISSUE SPECIFICITY</scope>
</reference>
<reference key="21">
    <citation type="journal article" date="2012" name="Nat. Commun.">
        <title>Quantitative maps of protein phosphorylation sites across 14 different rat organs and tissues.</title>
        <authorList>
            <person name="Lundby A."/>
            <person name="Secher A."/>
            <person name="Lage K."/>
            <person name="Nordsborg N.B."/>
            <person name="Dmytriyev A."/>
            <person name="Lundby C."/>
            <person name="Olsen J.V."/>
        </authorList>
    </citation>
    <scope>PHOSPHORYLATION [LARGE SCALE ANALYSIS] AT SER-4464; SER-4577; SER-4624 AND SER-4658</scope>
    <scope>IDENTIFICATION BY MASS SPECTROMETRY [LARGE SCALE ANALYSIS]</scope>
</reference>
<reference key="22">
    <citation type="journal article" date="2013" name="J. Cell Biol.">
        <title>ARH directs megalin to the endocytic recycling compartment to regulate its proteolysis and gene expression.</title>
        <authorList>
            <person name="Shah M."/>
            <person name="Baterina O.Y. Jr."/>
            <person name="Taupin V."/>
            <person name="Farquhar M.G."/>
        </authorList>
    </citation>
    <scope>INTERACTION WITH LDLRAP1</scope>
    <scope>PROTEOLYTIC PROCESSING</scope>
    <scope>MUTAGENESIS OF TYR-4527</scope>
</reference>
<reference key="23">
    <citation type="journal article" date="2017" name="Sci. Rep.">
        <title>Cellular uptake of proMMP-2:TIMP-2 complexes by the endocytic receptor megalin/LRP-2.</title>
        <authorList>
            <person name="Johanns M."/>
            <person name="Lemoine P."/>
            <person name="Janssens V."/>
            <person name="Grieco G."/>
            <person name="Moestrup S.K."/>
            <person name="Nielsen R."/>
            <person name="Christensen E.I."/>
            <person name="Courtoy P.J."/>
            <person name="Emonard H."/>
            <person name="Marbaix E."/>
            <person name="Henriet P."/>
        </authorList>
    </citation>
    <scope>FUNCTION</scope>
    <scope>INTERACTION WITH MMP2 AND TIMP1</scope>
</reference>
<reference key="24">
    <citation type="journal article" date="2007" name="J. Biomol. NMR">
        <title>Solution structure of the twelfth cysteine-rich ligand-binding repeat in rat megalin.</title>
        <authorList>
            <person name="Wolf C.A."/>
            <person name="Dancea F."/>
            <person name="Shi M."/>
            <person name="Bade-Noskova V."/>
            <person name="Ruterjans H."/>
            <person name="Kerjaschki D."/>
            <person name="Lucke C."/>
        </authorList>
    </citation>
    <scope>STRUCTURE BY NMR OF 1185-1229</scope>
    <scope>CALCIUM-BINDING SITE</scope>
    <scope>DISULFIDE BONDS</scope>
</reference>
<reference key="25">
    <citation type="journal article" date="2012" name="Sci. Signal.">
        <title>Sequence-specific recognition of a PxLPxI/L motif by an ankyrin repeat tumbler lock.</title>
        <authorList>
            <person name="Xu C."/>
            <person name="Jin J."/>
            <person name="Bian C."/>
            <person name="Lam R."/>
            <person name="Tian R."/>
            <person name="Weist R."/>
            <person name="You L."/>
            <person name="Nie J."/>
            <person name="Bochkarev A."/>
            <person name="Tempel W."/>
            <person name="Tan C.S."/>
            <person name="Wasney G.A."/>
            <person name="Vedadi M."/>
            <person name="Gish G.D."/>
            <person name="Arrowsmith C.H."/>
            <person name="Pawson T."/>
            <person name="Yang X.J."/>
            <person name="Min J."/>
        </authorList>
    </citation>
    <scope>X-RAY CRYSTALLOGRAPHY (1.85 ANGSTROMS) OF 4455-4465 IN COMPLEX WITH ANKRA2</scope>
    <scope>INTERACTION WITH ANKRA2</scope>
    <scope>MOTIF</scope>
</reference>
<evidence type="ECO:0000250" key="1">
    <source>
        <dbReference type="UniProtKB" id="A2ARV4"/>
    </source>
</evidence>
<evidence type="ECO:0000250" key="2">
    <source>
        <dbReference type="UniProtKB" id="C0HL13"/>
    </source>
</evidence>
<evidence type="ECO:0000250" key="3">
    <source>
        <dbReference type="UniProtKB" id="P98164"/>
    </source>
</evidence>
<evidence type="ECO:0000255" key="4"/>
<evidence type="ECO:0000255" key="5">
    <source>
        <dbReference type="PROSITE-ProRule" id="PRU00076"/>
    </source>
</evidence>
<evidence type="ECO:0000255" key="6">
    <source>
        <dbReference type="PROSITE-ProRule" id="PRU00124"/>
    </source>
</evidence>
<evidence type="ECO:0000255" key="7">
    <source>
        <dbReference type="PROSITE-ProRule" id="PRU00461"/>
    </source>
</evidence>
<evidence type="ECO:0000256" key="8">
    <source>
        <dbReference type="SAM" id="MobiDB-lite"/>
    </source>
</evidence>
<evidence type="ECO:0000269" key="9">
    <source>
    </source>
</evidence>
<evidence type="ECO:0000269" key="10">
    <source>
    </source>
</evidence>
<evidence type="ECO:0000269" key="11">
    <source>
    </source>
</evidence>
<evidence type="ECO:0000269" key="12">
    <source>
    </source>
</evidence>
<evidence type="ECO:0000269" key="13">
    <source>
    </source>
</evidence>
<evidence type="ECO:0000269" key="14">
    <source>
    </source>
</evidence>
<evidence type="ECO:0000269" key="15">
    <source>
    </source>
</evidence>
<evidence type="ECO:0000269" key="16">
    <source>
    </source>
</evidence>
<evidence type="ECO:0000269" key="17">
    <source>
    </source>
</evidence>
<evidence type="ECO:0000269" key="18">
    <source>
    </source>
</evidence>
<evidence type="ECO:0000269" key="19">
    <source>
    </source>
</evidence>
<evidence type="ECO:0000269" key="20">
    <source>
    </source>
</evidence>
<evidence type="ECO:0000269" key="21">
    <source>
    </source>
</evidence>
<evidence type="ECO:0000269" key="22">
    <source>
    </source>
</evidence>
<evidence type="ECO:0000269" key="23">
    <source>
    </source>
</evidence>
<evidence type="ECO:0000269" key="24">
    <source>
    </source>
</evidence>
<evidence type="ECO:0000269" key="25">
    <source>
    </source>
</evidence>
<evidence type="ECO:0000269" key="26">
    <source>
    </source>
</evidence>
<evidence type="ECO:0000269" key="27">
    <source>
    </source>
</evidence>
<evidence type="ECO:0000269" key="28">
    <source>
    </source>
</evidence>
<evidence type="ECO:0000269" key="29">
    <source>
    </source>
</evidence>
<evidence type="ECO:0000269" key="30">
    <source>
    </source>
</evidence>
<evidence type="ECO:0000269" key="31">
    <source>
    </source>
</evidence>
<evidence type="ECO:0000303" key="32">
    <source>
    </source>
</evidence>
<evidence type="ECO:0000305" key="33"/>
<evidence type="ECO:0007744" key="34">
    <source>
    </source>
</evidence>
<evidence type="ECO:0007829" key="35">
    <source>
        <dbReference type="PDB" id="2I1P"/>
    </source>
</evidence>
<evidence type="ECO:0007829" key="36">
    <source>
        <dbReference type="PDB" id="8JX8"/>
    </source>
</evidence>
<evidence type="ECO:0007829" key="37">
    <source>
        <dbReference type="PDB" id="8JXD"/>
    </source>
</evidence>
<evidence type="ECO:0007829" key="38">
    <source>
        <dbReference type="PDB" id="8JXE"/>
    </source>
</evidence>
<evidence type="ECO:0007829" key="39">
    <source>
        <dbReference type="PDB" id="8JXG"/>
    </source>
</evidence>
<evidence type="ECO:0007829" key="40">
    <source>
        <dbReference type="PDB" id="8JXH"/>
    </source>
</evidence>
<evidence type="ECO:0007829" key="41">
    <source>
        <dbReference type="PDB" id="8JXI"/>
    </source>
</evidence>
<proteinExistence type="evidence at protein level"/>
<organism>
    <name type="scientific">Rattus norvegicus</name>
    <name type="common">Rat</name>
    <dbReference type="NCBI Taxonomy" id="10116"/>
    <lineage>
        <taxon>Eukaryota</taxon>
        <taxon>Metazoa</taxon>
        <taxon>Chordata</taxon>
        <taxon>Craniata</taxon>
        <taxon>Vertebrata</taxon>
        <taxon>Euteleostomi</taxon>
        <taxon>Mammalia</taxon>
        <taxon>Eutheria</taxon>
        <taxon>Euarchontoglires</taxon>
        <taxon>Glires</taxon>
        <taxon>Rodentia</taxon>
        <taxon>Myomorpha</taxon>
        <taxon>Muroidea</taxon>
        <taxon>Muridae</taxon>
        <taxon>Murinae</taxon>
        <taxon>Rattus</taxon>
    </lineage>
</organism>
<accession>P98158</accession>
<comment type="function">
    <text evidence="1 2 3 9 11 13 14 15 16 17 18 21 22 23 24 25 28 31">Multiligand endocytic receptor. Acts together with CUBN to mediate endocytosis of high-density lipoproteins (By similarity). Mediates receptor-mediated uptake of polybasic drugs such as aprotinin, aminoglycosides and polymyxin B (PubMed:19202329, PubMed:7544804). In the kidney, mediates the tubular uptake and clearance of leptin (By similarity). Also mediates transport of leptin across the blood-brain barrier through endocytosis at the choroid plexus epithelium (PubMed:17324488). Endocytosis of leptin in neuronal cells is required for hypothalamic leptin signaling and leptin-mediated regulation of feeding and body weight (By similarity). Mediates endocytosis and subsequent lysosomal degradation of CST3 in kidney proximal tubule cells (PubMed:17462596). Mediates renal uptake of 25-hydroxyvitamin D3 in complex with the vitamin D3 transporter GC/DBP (By similarity). Mediates renal uptake of metallothionein-bound heavy metals (PubMed:15126248). Together with CUBN, mediates renal reabsorption of myoglobin (PubMed:12724130). Mediates renal uptake and subsequent lysosomal degradation of APOM (PubMed:16099815). Plays a role in kidney selenium homeostasis by mediating renal endocytosis of selenoprotein SEPP1 (By similarity). Mediates renal uptake of the antiapoptotic protein BIRC5/survivin which may be important for functional integrity of the kidney (By similarity). Mediates renal uptake of matrix metalloproteinase MMP2 in complex with metalloproteinase inhibitor TIMP1 (PubMed:28659595). Mediates endocytosis of Sonic hedgehog protein N-product (ShhN), the active product of SHH (PubMed:11964399, PubMed:16801528). Also mediates ShhN transcytosis (PubMed:16801528). In the embryonic neuroepithelium, mediates endocytic uptake and degradation of BMP4, is required for correct SHH localization in the ventral neural tube and plays a role in patterning of the ventral telencephalon (By similarity). Required at the onset of neurulation to sequester SHH on the apical surface of neuroepithelial cells of the rostral diencephalon ventral midline and to control PTCH1-dependent uptake and intracellular trafficking of SHH (By similarity). During neurulation, required in neuroepithelial cells for uptake of folate bound to the folate receptor FOLR1 which is necessary for neural tube closure (By similarity). In the adult brain, negatively regulates BMP signaling in the subependymal zone which enables neurogenesis to proceed (By similarity). In astrocytes, mediates endocytosis of ALB which is required for the synthesis of the neurotrophic factor oleic acid (PubMed:18466341). Involved in neurite branching (By similarity). During optic nerve development, required for SHH-mediated migration and proliferation of oligodendrocyte precursor cells (By similarity). Mediates endocytic uptake and clearance of SHH in the retinal margin which protects retinal progenitor cells from mitogenic stimuli and keeps them quiescent (By similarity). Plays a role in reproductive organ development by mediating uptake in reproductive tissues of androgen and estrogen bound to the sex hormone binding protein SHBG (PubMed:16143106). Mediates endocytosis of angiotensin-2 (PubMed:15467006). Also mediates endocytosis of angiotensin 1-7 (PubMed:16380466). Binds to the complex composed of beta-amyloid protein 40 and CLU/APOJ and mediates its endocytosis and lysosomal degradation (By similarity). Required for embryonic heart development (By similarity). Required for normal hearing, possibly through interaction with estrogen in the inner ear (PubMed:17846082).</text>
</comment>
<comment type="subunit">
    <text evidence="1 2 3 11 12 14 16 22 24 26 27 28">Binds plasminogen, extracellular matrix components, plasminogen activator-plasminogen activator inhibitor type I complex, apolipoprotein E-enriched beta-VLDL, lipoprotein lipase, lactoferrin, CLU/clusterin and calcium. Forms a multimeric complex together with LRPAP1 (PubMed:1400426). Interacts (via PxLPxI/L motif) with ANKRA2 (via ankyrin repeats) (PubMed:22649097). Interacts with LRP2BP. Interacts (via NPXY motif) with DAB2; the interaction is not affected by tyrosine phosphorylation of the NPXY motif (By similarity). Interacts with MB (PubMed:12724130). Interacts with BMP4 (By similarity). Interacts with the Sonic hedgehog protein N-product which is the active product of SHH (By similarity). Interacts with CST3 in a calcium-dependent manner (PubMed:17462596). Interacts with the vitamin-D binding protein GC/DBP (By similarity). Interacts with sex hormone-binding protein SHBG (PubMed:16143106). Interacts with angiotensin-2 (By similarity). Also interacts with angiotensin 1-7 (By similarity). Interacts with APOM (By similarity). Interacts with selenoprotein SEPP1 (By similarity). Interacts with LEP (PubMed:17324488). Interacts with ALB (PubMed:18466341). Interacts with the antiapoptotic protein BIRC5/survivin (By similarity). Interacts with matrix metalloproteinase MMP2 in complex with metalloproteinase inhibitor TIMP1 (PubMed:28659595). In neurons, forms a trimeric complex with APP and APPB1/FE65 (By similarity). Interacts with LDLRAP1/ARH; mediates trafficking of LRP2 to the endocytic recycling compartment (PubMed:23836931). Does not interact with beta-amyloid protein 40 alone but interacts with the complex composed of beta-amyloid protein 40 and CLU/APOJ (By similarity). Interacts with MDK (By similarity).</text>
</comment>
<comment type="interaction">
    <interactant intactId="EBI-6306650">
        <id>P98158</id>
    </interactant>
    <interactant intactId="EBI-6109302">
        <id>O88797</id>
        <label>Dab2</label>
    </interactant>
    <organismsDiffer>false</organismsDiffer>
    <experiments>2</experiments>
</comment>
<comment type="interaction">
    <interactant intactId="EBI-9251342">
        <id>PRO_0000017322</id>
    </interactant>
    <interactant intactId="EBI-9250714">
        <id>D3ZAR1</id>
        <label>Ldlrap1</label>
    </interactant>
    <organismsDiffer>false</organismsDiffer>
    <experiments>3</experiments>
</comment>
<comment type="subcellular location">
    <subcellularLocation>
        <location evidence="10 24 25 29">Apical cell membrane</location>
        <topology evidence="4">Single-pass type I membrane protein</topology>
    </subcellularLocation>
    <subcellularLocation>
        <location evidence="19">Endosome lumen</location>
    </subcellularLocation>
    <subcellularLocation>
        <location evidence="1">Membrane</location>
        <location evidence="1">Clathrin-coated pit</location>
    </subcellularLocation>
    <subcellularLocation>
        <location evidence="1">Cell projection</location>
        <location evidence="1">Dendrite</location>
    </subcellularLocation>
    <subcellularLocation>
        <location evidence="1">Cell projection</location>
        <location evidence="1">Axon</location>
    </subcellularLocation>
    <text evidence="11 29">Localizes to brush border membranes in the kidney (PubMed:12724130, PubMed:6752952). In the endolymphatic sac of the inner ear, located in the lumen of endosomes as a soluble form (PubMed:17063000).</text>
</comment>
<comment type="tissue specificity">
    <text evidence="19 21 24 25 30">In the inner ear, expressed in the lumen of the endolymphatic sac where it localizes to macrophage-like cells as well as to mitochondria-rich and ribosome-rich epithelial cells (at protein level) (PubMed:17063000). In the inner ear, expressed in marginal cells of the stria vascularis, epithelial cells at the spiral prominence, epithelial cells of Reissner's membrane facing the cochlear duct, and Kolliker's organ (at protein level) (PubMed:19202329). Expressed in the choroid plexus epithelium in the brain (at protein level) (PubMed:17324488). In the brain, also expressed in astrocytes (at protein level) (PubMed:18466341). Expression also detected in epithelial cells of the kidney glomerulus and proximal tubule, lung, epididymis and yolk sac (PubMed:7510321).</text>
</comment>
<comment type="developmental stage">
    <text evidence="24">In the brain, expression is high after birth and gradually decreases from postnatal day 4 until the end of the first postnatal week.</text>
</comment>
<comment type="domain">
    <text evidence="26">Two overlapping PxLPxI/L motifs mediate interaction with ankyrin repeats of ANKRA2.</text>
</comment>
<comment type="domain">
    <text evidence="10">The cytoplasmic domain is required for sorting to the apical cell membrane.</text>
</comment>
<comment type="PTM">
    <text evidence="27">A fraction undergoes proteolytic cleavage of the extracellular domain at the cell membrane to generate a cytoplasmic tail fragment. This is internalized into the early endosome from where it trafficks in an LDLRAP1/ARH-dependent manner to the endocytic recycling compartment (ERC). In the ERC, it is further cleaved by gamma-secretase to release a fragment which translocates to the nucleus and mediates transcriptional repression.</text>
</comment>
<comment type="PTM">
    <text evidence="1">N-glycosylation is required for ligand binding.</text>
</comment>
<comment type="similarity">
    <text evidence="33">Belongs to the LDLR family.</text>
</comment>
<dbReference type="EMBL" id="L34049">
    <property type="protein sequence ID" value="AAA51369.1"/>
    <property type="molecule type" value="mRNA"/>
</dbReference>
<dbReference type="PIR" id="T42737">
    <property type="entry name" value="T42737"/>
</dbReference>
<dbReference type="RefSeq" id="NP_110454.1">
    <property type="nucleotide sequence ID" value="NM_030827.1"/>
</dbReference>
<dbReference type="PDB" id="2I1P">
    <property type="method" value="NMR"/>
    <property type="chains" value="A=1185-1229"/>
</dbReference>
<dbReference type="PDB" id="3V2O">
    <property type="method" value="X-ray"/>
    <property type="resolution" value="1.89 A"/>
    <property type="chains" value="B=4448-4466"/>
</dbReference>
<dbReference type="PDB" id="3V2X">
    <property type="method" value="X-ray"/>
    <property type="resolution" value="1.85 A"/>
    <property type="chains" value="B=4455-4465"/>
</dbReference>
<dbReference type="PDB" id="8JUT">
    <property type="method" value="EM"/>
    <property type="resolution" value="4.20 A"/>
    <property type="chains" value="A/B=1-4660"/>
</dbReference>
<dbReference type="PDB" id="8JUU">
    <property type="method" value="EM"/>
    <property type="resolution" value="3.80 A"/>
    <property type="chains" value="A/B=1-4660"/>
</dbReference>
<dbReference type="PDB" id="8JX8">
    <property type="method" value="EM"/>
    <property type="resolution" value="3.30 A"/>
    <property type="chains" value="A/B=1-4660"/>
</dbReference>
<dbReference type="PDB" id="8JX9">
    <property type="method" value="EM"/>
    <property type="resolution" value="3.80 A"/>
    <property type="chains" value="A/B=1-4660"/>
</dbReference>
<dbReference type="PDB" id="8JXA">
    <property type="method" value="EM"/>
    <property type="resolution" value="3.80 A"/>
    <property type="chains" value="A/B=1-4660"/>
</dbReference>
<dbReference type="PDB" id="8JXB">
    <property type="method" value="EM"/>
    <property type="resolution" value="3.70 A"/>
    <property type="chains" value="A/B=1-4660"/>
</dbReference>
<dbReference type="PDB" id="8JXC">
    <property type="method" value="EM"/>
    <property type="resolution" value="3.70 A"/>
    <property type="chains" value="A=1-4660"/>
</dbReference>
<dbReference type="PDB" id="8JXD">
    <property type="method" value="EM"/>
    <property type="resolution" value="3.30 A"/>
    <property type="chains" value="A/B=1-4660"/>
</dbReference>
<dbReference type="PDB" id="8JXE">
    <property type="method" value="EM"/>
    <property type="resolution" value="3.20 A"/>
    <property type="chains" value="A/B=1-4660"/>
</dbReference>
<dbReference type="PDB" id="8JXF">
    <property type="method" value="EM"/>
    <property type="resolution" value="3.60 A"/>
    <property type="chains" value="B=1-4660"/>
</dbReference>
<dbReference type="PDB" id="8JXG">
    <property type="method" value="EM"/>
    <property type="resolution" value="3.20 A"/>
    <property type="chains" value="A=1-4660"/>
</dbReference>
<dbReference type="PDB" id="8JXH">
    <property type="method" value="EM"/>
    <property type="resolution" value="3.50 A"/>
    <property type="chains" value="A/B=1-4660"/>
</dbReference>
<dbReference type="PDB" id="8JXI">
    <property type="method" value="EM"/>
    <property type="resolution" value="3.40 A"/>
    <property type="chains" value="A/B=1-4660"/>
</dbReference>
<dbReference type="PDB" id="8JXJ">
    <property type="method" value="EM"/>
    <property type="resolution" value="3.90 A"/>
    <property type="chains" value="A/B=1-4660"/>
</dbReference>
<dbReference type="PDBsum" id="2I1P"/>
<dbReference type="PDBsum" id="3V2O"/>
<dbReference type="PDBsum" id="3V2X"/>
<dbReference type="PDBsum" id="8JUT"/>
<dbReference type="PDBsum" id="8JUU"/>
<dbReference type="PDBsum" id="8JX8"/>
<dbReference type="PDBsum" id="8JX9"/>
<dbReference type="PDBsum" id="8JXA"/>
<dbReference type="PDBsum" id="8JXB"/>
<dbReference type="PDBsum" id="8JXC"/>
<dbReference type="PDBsum" id="8JXD"/>
<dbReference type="PDBsum" id="8JXE"/>
<dbReference type="PDBsum" id="8JXF"/>
<dbReference type="PDBsum" id="8JXG"/>
<dbReference type="PDBsum" id="8JXH"/>
<dbReference type="PDBsum" id="8JXI"/>
<dbReference type="PDBsum" id="8JXJ"/>
<dbReference type="SMR" id="P98158"/>
<dbReference type="BioGRID" id="247894">
    <property type="interactions" value="2"/>
</dbReference>
<dbReference type="CORUM" id="P98158"/>
<dbReference type="DIP" id="DIP-44866N"/>
<dbReference type="FunCoup" id="P98158">
    <property type="interactions" value="462"/>
</dbReference>
<dbReference type="IntAct" id="P98158">
    <property type="interactions" value="6"/>
</dbReference>
<dbReference type="STRING" id="10116.ENSRNOP00000075159"/>
<dbReference type="GlyConnect" id="344">
    <property type="glycosylation" value="25 N-Linked glycans"/>
</dbReference>
<dbReference type="GlyCosmos" id="P98158">
    <property type="glycosylation" value="42 sites, 48 glycans"/>
</dbReference>
<dbReference type="GlyGen" id="P98158">
    <property type="glycosylation" value="44 sites, 48 N-linked glycans (1 site), 1 O-linked glycan (1 site)"/>
</dbReference>
<dbReference type="iPTMnet" id="P98158"/>
<dbReference type="PhosphoSitePlus" id="P98158"/>
<dbReference type="PaxDb" id="10116-ENSRNOP00000066394"/>
<dbReference type="GeneID" id="29216"/>
<dbReference type="KEGG" id="rno:29216"/>
<dbReference type="UCSC" id="RGD:68407">
    <property type="organism name" value="rat"/>
</dbReference>
<dbReference type="AGR" id="RGD:68407"/>
<dbReference type="CTD" id="4036"/>
<dbReference type="RGD" id="68407">
    <property type="gene designation" value="Lrp2"/>
</dbReference>
<dbReference type="eggNOG" id="KOG1215">
    <property type="taxonomic scope" value="Eukaryota"/>
</dbReference>
<dbReference type="InParanoid" id="P98158"/>
<dbReference type="OrthoDB" id="6482518at2759"/>
<dbReference type="PhylomeDB" id="P98158"/>
<dbReference type="Reactome" id="R-RNO-196791">
    <property type="pathway name" value="Vitamin D (calciferol) metabolism"/>
</dbReference>
<dbReference type="Reactome" id="R-RNO-8856825">
    <property type="pathway name" value="Cargo recognition for clathrin-mediated endocytosis"/>
</dbReference>
<dbReference type="Reactome" id="R-RNO-8856828">
    <property type="pathway name" value="Clathrin-mediated endocytosis"/>
</dbReference>
<dbReference type="Reactome" id="R-RNO-975634">
    <property type="pathway name" value="Retinoid metabolism and transport"/>
</dbReference>
<dbReference type="Reactome" id="R-RNO-9758890">
    <property type="pathway name" value="Transport of RCbl within the body"/>
</dbReference>
<dbReference type="EvolutionaryTrace" id="P98158"/>
<dbReference type="PRO" id="PR:P98158"/>
<dbReference type="Proteomes" id="UP000002494">
    <property type="component" value="Unplaced"/>
</dbReference>
<dbReference type="GO" id="GO:0045177">
    <property type="term" value="C:apical part of cell"/>
    <property type="evidence" value="ECO:0000266"/>
    <property type="project" value="RGD"/>
</dbReference>
<dbReference type="GO" id="GO:0016324">
    <property type="term" value="C:apical plasma membrane"/>
    <property type="evidence" value="ECO:0000314"/>
    <property type="project" value="UniProtKB"/>
</dbReference>
<dbReference type="GO" id="GO:0030424">
    <property type="term" value="C:axon"/>
    <property type="evidence" value="ECO:0000250"/>
    <property type="project" value="UniProtKB"/>
</dbReference>
<dbReference type="GO" id="GO:0044295">
    <property type="term" value="C:axonal growth cone"/>
    <property type="evidence" value="ECO:0000314"/>
    <property type="project" value="RGD"/>
</dbReference>
<dbReference type="GO" id="GO:0005903">
    <property type="term" value="C:brush border"/>
    <property type="evidence" value="ECO:0000314"/>
    <property type="project" value="RGD"/>
</dbReference>
<dbReference type="GO" id="GO:0031526">
    <property type="term" value="C:brush border membrane"/>
    <property type="evidence" value="ECO:0000314"/>
    <property type="project" value="UniProtKB"/>
</dbReference>
<dbReference type="GO" id="GO:0009986">
    <property type="term" value="C:cell surface"/>
    <property type="evidence" value="ECO:0000314"/>
    <property type="project" value="RGD"/>
</dbReference>
<dbReference type="GO" id="GO:0005905">
    <property type="term" value="C:clathrin-coated pit"/>
    <property type="evidence" value="ECO:0000266"/>
    <property type="project" value="RGD"/>
</dbReference>
<dbReference type="GO" id="GO:0030425">
    <property type="term" value="C:dendrite"/>
    <property type="evidence" value="ECO:0000250"/>
    <property type="project" value="UniProtKB"/>
</dbReference>
<dbReference type="GO" id="GO:0030139">
    <property type="term" value="C:endocytic vesicle"/>
    <property type="evidence" value="ECO:0000266"/>
    <property type="project" value="RGD"/>
</dbReference>
<dbReference type="GO" id="GO:0005783">
    <property type="term" value="C:endoplasmic reticulum"/>
    <property type="evidence" value="ECO:0000266"/>
    <property type="project" value="RGD"/>
</dbReference>
<dbReference type="GO" id="GO:0005768">
    <property type="term" value="C:endosome"/>
    <property type="evidence" value="ECO:0000314"/>
    <property type="project" value="RGD"/>
</dbReference>
<dbReference type="GO" id="GO:0031904">
    <property type="term" value="C:endosome lumen"/>
    <property type="evidence" value="ECO:0007669"/>
    <property type="project" value="UniProtKB-SubCell"/>
</dbReference>
<dbReference type="GO" id="GO:0009897">
    <property type="term" value="C:external side of plasma membrane"/>
    <property type="evidence" value="ECO:0000250"/>
    <property type="project" value="UniProtKB"/>
</dbReference>
<dbReference type="GO" id="GO:0005615">
    <property type="term" value="C:extracellular space"/>
    <property type="evidence" value="ECO:0000314"/>
    <property type="project" value="RGD"/>
</dbReference>
<dbReference type="GO" id="GO:0005794">
    <property type="term" value="C:Golgi apparatus"/>
    <property type="evidence" value="ECO:0000266"/>
    <property type="project" value="RGD"/>
</dbReference>
<dbReference type="GO" id="GO:0016020">
    <property type="term" value="C:membrane"/>
    <property type="evidence" value="ECO:0000266"/>
    <property type="project" value="RGD"/>
</dbReference>
<dbReference type="GO" id="GO:0005886">
    <property type="term" value="C:plasma membrane"/>
    <property type="evidence" value="ECO:0000314"/>
    <property type="project" value="ARUK-UCL"/>
</dbReference>
<dbReference type="GO" id="GO:0032991">
    <property type="term" value="C:protein-containing complex"/>
    <property type="evidence" value="ECO:0000314"/>
    <property type="project" value="RGD"/>
</dbReference>
<dbReference type="GO" id="GO:0043235">
    <property type="term" value="C:receptor complex"/>
    <property type="evidence" value="ECO:0000314"/>
    <property type="project" value="UniProtKB"/>
</dbReference>
<dbReference type="GO" id="GO:0005509">
    <property type="term" value="F:calcium ion binding"/>
    <property type="evidence" value="ECO:0000250"/>
    <property type="project" value="UniProtKB"/>
</dbReference>
<dbReference type="GO" id="GO:0038024">
    <property type="term" value="F:cargo receptor activity"/>
    <property type="evidence" value="ECO:0000266"/>
    <property type="project" value="RGD"/>
</dbReference>
<dbReference type="GO" id="GO:0030492">
    <property type="term" value="F:hemoglobin binding"/>
    <property type="evidence" value="ECO:0000314"/>
    <property type="project" value="RGD"/>
</dbReference>
<dbReference type="GO" id="GO:0042562">
    <property type="term" value="F:hormone binding"/>
    <property type="evidence" value="ECO:0000353"/>
    <property type="project" value="RGD"/>
</dbReference>
<dbReference type="GO" id="GO:0031994">
    <property type="term" value="F:insulin-like growth factor I binding"/>
    <property type="evidence" value="ECO:0000314"/>
    <property type="project" value="ARUK-UCL"/>
</dbReference>
<dbReference type="GO" id="GO:0050750">
    <property type="term" value="F:low-density lipoprotein particle receptor binding"/>
    <property type="evidence" value="ECO:0000353"/>
    <property type="project" value="RGD"/>
</dbReference>
<dbReference type="GO" id="GO:0016922">
    <property type="term" value="F:nuclear receptor binding"/>
    <property type="evidence" value="ECO:0000353"/>
    <property type="project" value="UniProtKB"/>
</dbReference>
<dbReference type="GO" id="GO:0030165">
    <property type="term" value="F:PDZ domain binding"/>
    <property type="evidence" value="ECO:0000353"/>
    <property type="project" value="RGD"/>
</dbReference>
<dbReference type="GO" id="GO:0140318">
    <property type="term" value="F:protein transporter activity"/>
    <property type="evidence" value="ECO:0000314"/>
    <property type="project" value="ARUK-UCL"/>
</dbReference>
<dbReference type="GO" id="GO:0044877">
    <property type="term" value="F:protein-containing complex binding"/>
    <property type="evidence" value="ECO:0000353"/>
    <property type="project" value="RGD"/>
</dbReference>
<dbReference type="GO" id="GO:0051087">
    <property type="term" value="F:protein-folding chaperone binding"/>
    <property type="evidence" value="ECO:0000266"/>
    <property type="project" value="RGD"/>
</dbReference>
<dbReference type="GO" id="GO:0017124">
    <property type="term" value="F:SH3 domain binding"/>
    <property type="evidence" value="ECO:0007669"/>
    <property type="project" value="UniProtKB-KW"/>
</dbReference>
<dbReference type="GO" id="GO:0097242">
    <property type="term" value="P:amyloid-beta clearance"/>
    <property type="evidence" value="ECO:0000315"/>
    <property type="project" value="ARUK-UCL"/>
</dbReference>
<dbReference type="GO" id="GO:0031100">
    <property type="term" value="P:animal organ regeneration"/>
    <property type="evidence" value="ECO:0000270"/>
    <property type="project" value="RGD"/>
</dbReference>
<dbReference type="GO" id="GO:0035904">
    <property type="term" value="P:aorta development"/>
    <property type="evidence" value="ECO:0000266"/>
    <property type="project" value="RGD"/>
</dbReference>
<dbReference type="GO" id="GO:0008283">
    <property type="term" value="P:cell population proliferation"/>
    <property type="evidence" value="ECO:0000266"/>
    <property type="project" value="RGD"/>
</dbReference>
<dbReference type="GO" id="GO:0071363">
    <property type="term" value="P:cellular response to growth factor stimulus"/>
    <property type="evidence" value="ECO:0000315"/>
    <property type="project" value="ARUK-UCL"/>
</dbReference>
<dbReference type="GO" id="GO:0061642">
    <property type="term" value="P:chemoattraction of axon"/>
    <property type="evidence" value="ECO:0000315"/>
    <property type="project" value="RGD"/>
</dbReference>
<dbReference type="GO" id="GO:0060982">
    <property type="term" value="P:coronary artery morphogenesis"/>
    <property type="evidence" value="ECO:0000250"/>
    <property type="project" value="UniProtKB"/>
</dbReference>
<dbReference type="GO" id="GO:0060976">
    <property type="term" value="P:coronary vasculature development"/>
    <property type="evidence" value="ECO:0000266"/>
    <property type="project" value="RGD"/>
</dbReference>
<dbReference type="GO" id="GO:1904888">
    <property type="term" value="P:cranial skeletal system development"/>
    <property type="evidence" value="ECO:0000266"/>
    <property type="project" value="RGD"/>
</dbReference>
<dbReference type="GO" id="GO:0034311">
    <property type="term" value="P:diol metabolic process"/>
    <property type="evidence" value="ECO:0000266"/>
    <property type="project" value="RGD"/>
</dbReference>
<dbReference type="GO" id="GO:0020028">
    <property type="term" value="P:endocytic hemoglobin import into cell"/>
    <property type="evidence" value="ECO:0000315"/>
    <property type="project" value="RGD"/>
</dbReference>
<dbReference type="GO" id="GO:0006897">
    <property type="term" value="P:endocytosis"/>
    <property type="evidence" value="ECO:0000315"/>
    <property type="project" value="RGD"/>
</dbReference>
<dbReference type="GO" id="GO:0016197">
    <property type="term" value="P:endosomal transport"/>
    <property type="evidence" value="ECO:0000315"/>
    <property type="project" value="RGD"/>
</dbReference>
<dbReference type="GO" id="GO:1904447">
    <property type="term" value="P:folate import across plasma membrane"/>
    <property type="evidence" value="ECO:0000250"/>
    <property type="project" value="UniProtKB"/>
</dbReference>
<dbReference type="GO" id="GO:0030900">
    <property type="term" value="P:forebrain development"/>
    <property type="evidence" value="ECO:0000266"/>
    <property type="project" value="RGD"/>
</dbReference>
<dbReference type="GO" id="GO:0010467">
    <property type="term" value="P:gene expression"/>
    <property type="evidence" value="ECO:0000266"/>
    <property type="project" value="RGD"/>
</dbReference>
<dbReference type="GO" id="GO:0007507">
    <property type="term" value="P:heart development"/>
    <property type="evidence" value="ECO:0000266"/>
    <property type="project" value="RGD"/>
</dbReference>
<dbReference type="GO" id="GO:0001822">
    <property type="term" value="P:kidney development"/>
    <property type="evidence" value="ECO:0000266"/>
    <property type="project" value="RGD"/>
</dbReference>
<dbReference type="GO" id="GO:0008584">
    <property type="term" value="P:male gonad development"/>
    <property type="evidence" value="ECO:0000250"/>
    <property type="project" value="UniProtKB"/>
</dbReference>
<dbReference type="GO" id="GO:0030001">
    <property type="term" value="P:metal ion transport"/>
    <property type="evidence" value="ECO:0000314"/>
    <property type="project" value="UniProtKB"/>
</dbReference>
<dbReference type="GO" id="GO:0072237">
    <property type="term" value="P:metanephric proximal tubule development"/>
    <property type="evidence" value="ECO:0000270"/>
    <property type="project" value="RGD"/>
</dbReference>
<dbReference type="GO" id="GO:0043066">
    <property type="term" value="P:negative regulation of apoptotic process"/>
    <property type="evidence" value="ECO:0000266"/>
    <property type="project" value="RGD"/>
</dbReference>
<dbReference type="GO" id="GO:0030514">
    <property type="term" value="P:negative regulation of BMP signaling pathway"/>
    <property type="evidence" value="ECO:0000250"/>
    <property type="project" value="UniProtKB"/>
</dbReference>
<dbReference type="GO" id="GO:0010951">
    <property type="term" value="P:negative regulation of endopeptidase activity"/>
    <property type="evidence" value="ECO:0000305"/>
    <property type="project" value="BHF-UCL"/>
</dbReference>
<dbReference type="GO" id="GO:0001843">
    <property type="term" value="P:neural tube closure"/>
    <property type="evidence" value="ECO:0000250"/>
    <property type="project" value="UniProtKB"/>
</dbReference>
<dbReference type="GO" id="GO:0140058">
    <property type="term" value="P:neuron projection arborization"/>
    <property type="evidence" value="ECO:0000250"/>
    <property type="project" value="UniProtKB"/>
</dbReference>
<dbReference type="GO" id="GO:0003151">
    <property type="term" value="P:outflow tract morphogenesis"/>
    <property type="evidence" value="ECO:0000266"/>
    <property type="project" value="RGD"/>
</dbReference>
<dbReference type="GO" id="GO:0003148">
    <property type="term" value="P:outflow tract septum morphogenesis"/>
    <property type="evidence" value="ECO:0000250"/>
    <property type="project" value="UniProtKB"/>
</dbReference>
<dbReference type="GO" id="GO:0043491">
    <property type="term" value="P:phosphatidylinositol 3-kinase/protein kinase B signal transduction"/>
    <property type="evidence" value="ECO:0000266"/>
    <property type="project" value="RGD"/>
</dbReference>
<dbReference type="GO" id="GO:0045807">
    <property type="term" value="P:positive regulation of endocytosis"/>
    <property type="evidence" value="ECO:0000315"/>
    <property type="project" value="RGD"/>
</dbReference>
<dbReference type="GO" id="GO:0140077">
    <property type="term" value="P:positive regulation of lipoprotein transport"/>
    <property type="evidence" value="ECO:0000315"/>
    <property type="project" value="RGD"/>
</dbReference>
<dbReference type="GO" id="GO:1905167">
    <property type="term" value="P:positive regulation of lysosomal protein catabolic process"/>
    <property type="evidence" value="ECO:0000266"/>
    <property type="project" value="RGD"/>
</dbReference>
<dbReference type="GO" id="GO:0050769">
    <property type="term" value="P:positive regulation of neurogenesis"/>
    <property type="evidence" value="ECO:0000250"/>
    <property type="project" value="UniProtKB"/>
</dbReference>
<dbReference type="GO" id="GO:0070447">
    <property type="term" value="P:positive regulation of oligodendrocyte progenitor proliferation"/>
    <property type="evidence" value="ECO:0000250"/>
    <property type="project" value="UniProtKB"/>
</dbReference>
<dbReference type="GO" id="GO:0017038">
    <property type="term" value="P:protein import"/>
    <property type="evidence" value="ECO:0000315"/>
    <property type="project" value="RGD"/>
</dbReference>
<dbReference type="GO" id="GO:0015031">
    <property type="term" value="P:protein transport"/>
    <property type="evidence" value="ECO:0000266"/>
    <property type="project" value="RGD"/>
</dbReference>
<dbReference type="GO" id="GO:0061156">
    <property type="term" value="P:pulmonary artery morphogenesis"/>
    <property type="evidence" value="ECO:0000250"/>
    <property type="project" value="UniProtKB"/>
</dbReference>
<dbReference type="GO" id="GO:0006898">
    <property type="term" value="P:receptor-mediated endocytosis"/>
    <property type="evidence" value="ECO:0000314"/>
    <property type="project" value="UniProtKB"/>
</dbReference>
<dbReference type="GO" id="GO:0044321">
    <property type="term" value="P:response to leptin"/>
    <property type="evidence" value="ECO:0000315"/>
    <property type="project" value="ARUK-UCL"/>
</dbReference>
<dbReference type="GO" id="GO:0032526">
    <property type="term" value="P:response to retinoic acid"/>
    <property type="evidence" value="ECO:0000270"/>
    <property type="project" value="RGD"/>
</dbReference>
<dbReference type="GO" id="GO:0033280">
    <property type="term" value="P:response to vitamin D"/>
    <property type="evidence" value="ECO:0000270"/>
    <property type="project" value="RGD"/>
</dbReference>
<dbReference type="GO" id="GO:0010165">
    <property type="term" value="P:response to X-ray"/>
    <property type="evidence" value="ECO:0000314"/>
    <property type="project" value="RGD"/>
</dbReference>
<dbReference type="GO" id="GO:0009410">
    <property type="term" value="P:response to xenobiotic stimulus"/>
    <property type="evidence" value="ECO:0000270"/>
    <property type="project" value="RGD"/>
</dbReference>
<dbReference type="GO" id="GO:0003139">
    <property type="term" value="P:secondary heart field specification"/>
    <property type="evidence" value="ECO:0000250"/>
    <property type="project" value="UniProtKB"/>
</dbReference>
<dbReference type="GO" id="GO:0007605">
    <property type="term" value="P:sensory perception of sound"/>
    <property type="evidence" value="ECO:0000250"/>
    <property type="project" value="UniProtKB"/>
</dbReference>
<dbReference type="GO" id="GO:0045056">
    <property type="term" value="P:transcytosis"/>
    <property type="evidence" value="ECO:0000315"/>
    <property type="project" value="UniProtKB"/>
</dbReference>
<dbReference type="GO" id="GO:0060068">
    <property type="term" value="P:vagina development"/>
    <property type="evidence" value="ECO:0000250"/>
    <property type="project" value="UniProtKB"/>
</dbReference>
<dbReference type="GO" id="GO:0003223">
    <property type="term" value="P:ventricular compact myocardium morphogenesis"/>
    <property type="evidence" value="ECO:0000250"/>
    <property type="project" value="UniProtKB"/>
</dbReference>
<dbReference type="GO" id="GO:0003281">
    <property type="term" value="P:ventricular septum development"/>
    <property type="evidence" value="ECO:0000266"/>
    <property type="project" value="RGD"/>
</dbReference>
<dbReference type="GO" id="GO:0042359">
    <property type="term" value="P:vitamin D metabolic process"/>
    <property type="evidence" value="ECO:0000266"/>
    <property type="project" value="RGD"/>
</dbReference>
<dbReference type="CDD" id="cd00054">
    <property type="entry name" value="EGF_CA"/>
    <property type="match status" value="3"/>
</dbReference>
<dbReference type="CDD" id="cd00112">
    <property type="entry name" value="LDLa"/>
    <property type="match status" value="36"/>
</dbReference>
<dbReference type="FunFam" id="2.120.10.30:FF:000049">
    <property type="entry name" value="LDL receptor related protein 2"/>
    <property type="match status" value="1"/>
</dbReference>
<dbReference type="FunFam" id="4.10.400.10:FF:000151">
    <property type="entry name" value="LDL receptor related protein 2"/>
    <property type="match status" value="1"/>
</dbReference>
<dbReference type="FunFam" id="2.10.25.10:FF:000009">
    <property type="entry name" value="Low-density lipoprotein receptor isoform 1"/>
    <property type="match status" value="3"/>
</dbReference>
<dbReference type="FunFam" id="4.10.400.10:FF:000134">
    <property type="entry name" value="Low-density lipoprotein RecePtor related"/>
    <property type="match status" value="1"/>
</dbReference>
<dbReference type="FunFam" id="4.10.400.10:FF:000001">
    <property type="entry name" value="Low-density lipoprotein receptor-related protein 1"/>
    <property type="match status" value="3"/>
</dbReference>
<dbReference type="FunFam" id="4.10.400.10:FF:000002">
    <property type="entry name" value="Low-density lipoprotein receptor-related protein 1"/>
    <property type="match status" value="3"/>
</dbReference>
<dbReference type="FunFam" id="4.10.400.10:FF:000004">
    <property type="entry name" value="Low-density lipoprotein receptor-related protein 1"/>
    <property type="match status" value="1"/>
</dbReference>
<dbReference type="FunFam" id="4.10.400.10:FF:000011">
    <property type="entry name" value="Low-density lipoprotein receptor-related protein 1"/>
    <property type="match status" value="2"/>
</dbReference>
<dbReference type="FunFam" id="4.10.400.10:FF:000005">
    <property type="entry name" value="low-density lipoprotein receptor-related protein 1B"/>
    <property type="match status" value="1"/>
</dbReference>
<dbReference type="FunFam" id="2.10.25.10:FF:000805">
    <property type="entry name" value="Low-density lipoprotein receptor-related protein 2"/>
    <property type="match status" value="1"/>
</dbReference>
<dbReference type="FunFam" id="2.120.10.30:FF:000035">
    <property type="entry name" value="Low-density lipoprotein receptor-related protein 2"/>
    <property type="match status" value="1"/>
</dbReference>
<dbReference type="FunFam" id="2.120.10.30:FF:000040">
    <property type="entry name" value="Low-density lipoprotein receptor-related protein 2"/>
    <property type="match status" value="1"/>
</dbReference>
<dbReference type="FunFam" id="2.120.10.30:FF:000051">
    <property type="entry name" value="Low-density lipoprotein receptor-related protein 2"/>
    <property type="match status" value="1"/>
</dbReference>
<dbReference type="FunFam" id="2.120.10.30:FF:000056">
    <property type="entry name" value="Low-density lipoprotein receptor-related protein 2"/>
    <property type="match status" value="1"/>
</dbReference>
<dbReference type="FunFam" id="2.120.10.30:FF:000057">
    <property type="entry name" value="Low-density lipoprotein receptor-related protein 2"/>
    <property type="match status" value="1"/>
</dbReference>
<dbReference type="FunFam" id="2.120.10.30:FF:000058">
    <property type="entry name" value="Low-density lipoprotein receptor-related protein 2"/>
    <property type="match status" value="1"/>
</dbReference>
<dbReference type="FunFam" id="4.10.400.10:FF:000034">
    <property type="entry name" value="Low-density lipoprotein receptor-related protein 2"/>
    <property type="match status" value="7"/>
</dbReference>
<dbReference type="FunFam" id="4.10.400.10:FF:000045">
    <property type="entry name" value="Low-density lipoprotein receptor-related protein 2"/>
    <property type="match status" value="2"/>
</dbReference>
<dbReference type="FunFam" id="4.10.400.10:FF:000108">
    <property type="entry name" value="Low-density lipoprotein receptor-related protein 2"/>
    <property type="match status" value="2"/>
</dbReference>
<dbReference type="FunFam" id="4.10.400.10:FF:000112">
    <property type="entry name" value="Low-density lipoprotein receptor-related protein 2"/>
    <property type="match status" value="1"/>
</dbReference>
<dbReference type="FunFam" id="4.10.400.10:FF:000147">
    <property type="entry name" value="Low-density lipoprotein receptor-related protein 2"/>
    <property type="match status" value="2"/>
</dbReference>
<dbReference type="FunFam" id="4.10.400.10:FF:000222">
    <property type="entry name" value="Low-density lipoprotein receptor-related protein 2"/>
    <property type="match status" value="1"/>
</dbReference>
<dbReference type="FunFam" id="4.10.400.10:FF:000078">
    <property type="entry name" value="low-density lipoprotein receptor-related protein 2"/>
    <property type="match status" value="2"/>
</dbReference>
<dbReference type="FunFam" id="2.120.10.30:FF:000008">
    <property type="entry name" value="Low-density lipoprotein receptor-related protein 4"/>
    <property type="match status" value="1"/>
</dbReference>
<dbReference type="Gene3D" id="2.10.25.10">
    <property type="entry name" value="Laminin"/>
    <property type="match status" value="7"/>
</dbReference>
<dbReference type="Gene3D" id="4.10.400.10">
    <property type="entry name" value="Low-density Lipoprotein Receptor"/>
    <property type="match status" value="36"/>
</dbReference>
<dbReference type="Gene3D" id="2.120.10.30">
    <property type="entry name" value="TolB, C-terminal domain"/>
    <property type="match status" value="8"/>
</dbReference>
<dbReference type="IDEAL" id="IID50221"/>
<dbReference type="InterPro" id="IPR011042">
    <property type="entry name" value="6-blade_b-propeller_TolB-like"/>
</dbReference>
<dbReference type="InterPro" id="IPR026823">
    <property type="entry name" value="cEGF"/>
</dbReference>
<dbReference type="InterPro" id="IPR001881">
    <property type="entry name" value="EGF-like_Ca-bd_dom"/>
</dbReference>
<dbReference type="InterPro" id="IPR000742">
    <property type="entry name" value="EGF-like_dom"/>
</dbReference>
<dbReference type="InterPro" id="IPR000152">
    <property type="entry name" value="EGF-type_Asp/Asn_hydroxyl_site"/>
</dbReference>
<dbReference type="InterPro" id="IPR018097">
    <property type="entry name" value="EGF_Ca-bd_CS"/>
</dbReference>
<dbReference type="InterPro" id="IPR056588">
    <property type="entry name" value="EGF_LRP2"/>
</dbReference>
<dbReference type="InterPro" id="IPR009030">
    <property type="entry name" value="Growth_fac_rcpt_cys_sf"/>
</dbReference>
<dbReference type="InterPro" id="IPR036055">
    <property type="entry name" value="LDL_receptor-like_sf"/>
</dbReference>
<dbReference type="InterPro" id="IPR051221">
    <property type="entry name" value="LDLR-related"/>
</dbReference>
<dbReference type="InterPro" id="IPR023415">
    <property type="entry name" value="LDLR_class-A_CS"/>
</dbReference>
<dbReference type="InterPro" id="IPR000033">
    <property type="entry name" value="LDLR_classB_rpt"/>
</dbReference>
<dbReference type="InterPro" id="IPR002172">
    <property type="entry name" value="LDrepeatLR_classA_rpt"/>
</dbReference>
<dbReference type="InterPro" id="IPR049883">
    <property type="entry name" value="NOTCH1_EGF-like"/>
</dbReference>
<dbReference type="PANTHER" id="PTHR22722">
    <property type="entry name" value="LOW-DENSITY LIPOPROTEIN RECEPTOR-RELATED PROTEIN 2-RELATED"/>
    <property type="match status" value="1"/>
</dbReference>
<dbReference type="Pfam" id="PF12662">
    <property type="entry name" value="cEGF"/>
    <property type="match status" value="2"/>
</dbReference>
<dbReference type="Pfam" id="PF07645">
    <property type="entry name" value="EGF_CA"/>
    <property type="match status" value="1"/>
</dbReference>
<dbReference type="Pfam" id="PF24468">
    <property type="entry name" value="EGF_LRP2"/>
    <property type="match status" value="1"/>
</dbReference>
<dbReference type="Pfam" id="PF14670">
    <property type="entry name" value="FXa_inhibition"/>
    <property type="match status" value="2"/>
</dbReference>
<dbReference type="Pfam" id="PF00057">
    <property type="entry name" value="Ldl_recept_a"/>
    <property type="match status" value="35"/>
</dbReference>
<dbReference type="Pfam" id="PF00058">
    <property type="entry name" value="Ldl_recept_b"/>
    <property type="match status" value="15"/>
</dbReference>
<dbReference type="PRINTS" id="PR00261">
    <property type="entry name" value="LDLRECEPTOR"/>
</dbReference>
<dbReference type="SMART" id="SM00181">
    <property type="entry name" value="EGF"/>
    <property type="match status" value="22"/>
</dbReference>
<dbReference type="SMART" id="SM00179">
    <property type="entry name" value="EGF_CA"/>
    <property type="match status" value="9"/>
</dbReference>
<dbReference type="SMART" id="SM00192">
    <property type="entry name" value="LDLa"/>
    <property type="match status" value="36"/>
</dbReference>
<dbReference type="SMART" id="SM00135">
    <property type="entry name" value="LY"/>
    <property type="match status" value="36"/>
</dbReference>
<dbReference type="SUPFAM" id="SSF57196">
    <property type="entry name" value="EGF/Laminin"/>
    <property type="match status" value="4"/>
</dbReference>
<dbReference type="SUPFAM" id="SSF57184">
    <property type="entry name" value="Growth factor receptor domain"/>
    <property type="match status" value="2"/>
</dbReference>
<dbReference type="SUPFAM" id="SSF57424">
    <property type="entry name" value="LDL receptor-like module"/>
    <property type="match status" value="35"/>
</dbReference>
<dbReference type="SUPFAM" id="SSF63825">
    <property type="entry name" value="YWTD domain"/>
    <property type="match status" value="8"/>
</dbReference>
<dbReference type="PROSITE" id="PS00010">
    <property type="entry name" value="ASX_HYDROXYL"/>
    <property type="match status" value="4"/>
</dbReference>
<dbReference type="PROSITE" id="PS00022">
    <property type="entry name" value="EGF_1"/>
    <property type="match status" value="1"/>
</dbReference>
<dbReference type="PROSITE" id="PS01186">
    <property type="entry name" value="EGF_2"/>
    <property type="match status" value="8"/>
</dbReference>
<dbReference type="PROSITE" id="PS50026">
    <property type="entry name" value="EGF_3"/>
    <property type="match status" value="8"/>
</dbReference>
<dbReference type="PROSITE" id="PS01187">
    <property type="entry name" value="EGF_CA"/>
    <property type="match status" value="3"/>
</dbReference>
<dbReference type="PROSITE" id="PS01209">
    <property type="entry name" value="LDLRA_1"/>
    <property type="match status" value="31"/>
</dbReference>
<dbReference type="PROSITE" id="PS50068">
    <property type="entry name" value="LDLRA_2"/>
    <property type="match status" value="36"/>
</dbReference>
<dbReference type="PROSITE" id="PS51120">
    <property type="entry name" value="LDLRB"/>
    <property type="match status" value="35"/>
</dbReference>
<gene>
    <name type="primary">Lrp2</name>
</gene>
<protein>
    <recommendedName>
        <fullName>Low-density lipoprotein receptor-related protein 2</fullName>
        <shortName>LRP-2</shortName>
    </recommendedName>
    <alternativeName>
        <fullName evidence="32">Glycoprotein 330</fullName>
        <shortName evidence="32">gp330</shortName>
    </alternativeName>
    <alternativeName>
        <fullName>Megalin</fullName>
    </alternativeName>
</protein>
<keyword id="KW-0002">3D-structure</keyword>
<keyword id="KW-0106">Calcium</keyword>
<keyword id="KW-1003">Cell membrane</keyword>
<keyword id="KW-0966">Cell projection</keyword>
<keyword id="KW-0168">Coated pit</keyword>
<keyword id="KW-1015">Disulfide bond</keyword>
<keyword id="KW-0245">EGF-like domain</keyword>
<keyword id="KW-0254">Endocytosis</keyword>
<keyword id="KW-0967">Endosome</keyword>
<keyword id="KW-0325">Glycoprotein</keyword>
<keyword id="KW-1009">Hearing</keyword>
<keyword id="KW-0472">Membrane</keyword>
<keyword id="KW-0479">Metal-binding</keyword>
<keyword id="KW-0524">Neurogenesis</keyword>
<keyword id="KW-0597">Phosphoprotein</keyword>
<keyword id="KW-0675">Receptor</keyword>
<keyword id="KW-1185">Reference proteome</keyword>
<keyword id="KW-0677">Repeat</keyword>
<keyword id="KW-0729">SH3-binding</keyword>
<keyword id="KW-0732">Signal</keyword>
<keyword id="KW-0812">Transmembrane</keyword>
<keyword id="KW-1133">Transmembrane helix</keyword>
<keyword id="KW-0813">Transport</keyword>
<name>LRP2_RAT</name>
<sequence length="4660" mass="519276">MERGAAAAAWMLLLAIAACLEPVSSQECGSGNFRCDNGYCIPASWRCDGTRDCLDDTDEIGCPPRSCESGLFLCPAEGTCIPSSWVCDEDKDCSDGADEQQNCAGTTCSAQQMTCSNGQCIPSEYRCDHVSDCPDGSDERNCHYPTCDQLTCANGACYNTSQRCDQKVDCRDSSDEANCTTLCSQKEFECGSGECILRAYVCDHDNDCEDNSDERNCNYDTCGGHQFTCSNGQCINQNWVCDGDDDCQDSGDEDGCESNQSHHRCYPREWACPGSGRCISIDKVCDGVPDCPEGDDENNVTSGRTCGMGVCSVLNCEYQCHQTPFGGECFCPPGHIINSNDSRTCIDFDDCQIWGICDQKCENRQGRHQCLCEEGYILERGQHCKSSDSFSAASVIFSNGRDLLVGDLHGRNFRILAESKNRGMVMGVDFHYQKHRVFWTDPMQEKVFSTDINGLNTQEILNVSVDTPENLAVDWINNKLYLVETKVNRIDVVNLEGNQRVTLITENLGHPRGIALDPTVGYLFFSDWGSLSGQPKVERAFMDGSNRKDLVTTKVGWPAGITLDLVSKRVYWVDSRYDYIETVTYDGIQRKTVARGGSLVPHPFGISLFEEHVFFTDWTKMAVMKASKFTETNPQVYHQSSLRPHGVTVYHALRQPNATNPCGSNNGGCAQVCVLSHRTDNGGLGYRCKCEFGFELDDDEHRCVAVKNFLLFSSKTAVRGIPFTLSTQEDVMVPVTGSPSFFVGIDFDAQHSTVFYSDLSKDIIYKQKIDGTGKEVITANRLESVECLTFDWISRNLYWTDGGLKSVTVLRLADKSRRQIISNLNNPRSIVVHPTAGYMFLSDWFRPAKIMRAWSDGSHLMPIVNTSLGWPNGLAIDWSASRLYWVDAFFDKIEHSTLDGLDRKRLGHVDQMTHPFGLTVFKDNVFITDWRLGAIIRVRKSDGGDMTVIRRGISSVMHVKAYDADLQTGSNYCSQTTHANGDCSHFCFPVPNFQRVCGCPYGMKLQRDQMTCEGDPAREPPTQQCGSLSFPCNNGKCVPSFFRCDGVDDCHDNSDEHQCGVFNNTCSPSAFACVRGGQCIPGQWHCDRQNDCLDGSDEQNCPTHATSSTCPSTSFTCDNHVCIPKDWVCDTDNDCSDGSDEKNCQASGTCQPTQFRCPDHRCISPLYVCDGDKDCADGSDEAGCVLNCTSAQFKCADGSSCINSRYRCDGVYDCRDNSDEAGCPTRPPGMCHPDEFQCQGDGTCIPNTWECDGHPDCIHGSDEHTGCVPKTCSPTHFLCDNGNCIYKAWICDGDNDCRDMSDEKDCPTQPFHCPSTQWQCPGYSTCINLSALCDGVFDCPNGTDESPLCNQDSCSHFNGGCTHQCMQGPFGATCLCPLGYQLANDTKTCEDINECDIPGFCSQHCVNMRGSFRCACDPEYTLESDGRTCKVTGSENPLLVVASRDKIIVDNITAHTHNLYSLVQDVSFVVALDFDSVTGRVFWSDLLQGKTWSVFQNGTDKRVVHDSGLSVTEMIAVDWIGRNLYWTDYALETIEVSKIDGSHRTVLISKNVTKPRGLALDPRMGDNVMFWSDWGHHPRIERASMDGTMRTVIVQEKIYWPCGLSIDYPNRLIYFMDAYLDYIEFCDYDGHNRRQVIASDLVLHHPHALTLFEDFVYWTDRGTRQVMQANKWHGGNQSVVMYSVHQPLGITAIHPSRQPPSRNPCASASCSHLCLLSAQAPRHYSCACPSGWNLSDDSVNCVRGDQPFLMSVRDNIIFGISLDPEVKSNDAMVPISGIQHGYDVEFDDSEQFIYWVENPGEIHRVKTDGSNRTVFAPLSLLGSSLGLALDWVSRNIYYTTPASRSIEVLTLKGDTRYGKTLIANDGTPLGVGFPVGIAVDPARGKLYWSDHGTDSGVPAKIASANMDGTSLKILFTGNLQHLEVVTLDIQEQKLYWAVTSRGVIERGNVDGTERMILVHHLAHPWGLVVYGSFLYYSDEQYEVIERVDKSSGNNKVVLRDNVPYLRGLRVYHRRNAADSSNGCSNNPNACQQICLPVPGGMFSCACASGFKLSPDGRSCSPYNSFMVVSMLPAVRGFSLELSDHSEAMVPVAGQGRNVLHADVDVANGFIYWCDFSSSVRSSNGIRRIKPDGSNFTNVVTYGIGANGIRGVALDWAAGNLYFTNAFVYETLIEVLRINTTYRRVLLKVSVDMPRHIIVDPKHRYLFWADYGQKPKIERSFLDCTNRTVLVSEGIVTPRGLAMDHDTGYIYWVDDSLDLIARIHLDGGESQVVRYGSRYPTPYGITVFGESIIWVDRNLKKVFQASKQPGNTDPPVVIRDKINLLRDVTIFDEHAQPLSPAELNNNPCLQSNGGCSHFCFALPELPTPRCGCAFGTLGNDGKSCATSQEDFLIYSLNNSLRSLHFDPRDHSLPFQVISVAGTAIALDYDRRNNRIFFTQKLNSLRGQISYVSLYSGSSSPTVLLSNIGVTDGIAFDWINRRIYYSDFSNQTINSMAEDGSNRAVIARVSKPRAIVLDPCRGYMYWTDWGTNAKIERATLGGNFRVPIVNTSLVWPNGLALDLETDLLYWADASLQKIERSTLTGTNREVVVSTAFHSFGLTVYGQYIYWTDLYTRKIYRANKYDGSDLVAMTTRLPTQPSGISTVVKTQRQQCSNPCDQFNGGCSHICAPGPNGAECQCPHEGNWYLANDNKYCVVDTGTRCNQLQFTCLNGHCINQDWKCDNDNDCGDGSDELPTVCAFHTCRSTAFTCGNGRCVPYHYRCDYYNDCGDNSDEAGCLFRNCNSTTEFTCSNGRCIPLSYVCNGINNCHDNDTSDEKNCPPHTCPPDFTKCQTTNICVPRAFLCDGDNDCGDGSDENPIYCASHTCRSNEFQCLSPQRCIPSYWFCDGEADCADGSDEPDTCGHSVNTCRASQFQCDNGRCISGNWVCDGDNDCGDMSDEDQRHHCELQNCSSTQFTCVNSRPPNRRCIPQYWVCDGDADCSDALDELQNCTMRTCSAGEFSCANGRCVRQSFRCDRRNDCGDYSDERGCSYPPCHANQFTCQNGRCIPRFFVCDEDNDCGDGSDEQEHLCHTPEPTCPLHQFRCDNGHCIEMGRVCNHVDDCSDNSDEKGCGINECLDSSISRCDHNCTDTITSFYCSCLPGYKLMSDKRSCVDIDECKESPQLCSQKCENVVGSYICKCAPGYIREPDGKSCRQNSNIEPYLIFSNRYYIRNLTTDGSSYSLILQGLGNVVALDFDRVEKRLYWIDAEKQIIERMFLNKTNRETIINHRLRRAESLAVDWVSRKLYWLDAILDCLFVSDLEGRHRKMIAQHCVDANNTFCFEHPRGIVLHPQRGHVYWADWGVHAYIGRIGMDGTNKSVIISTKIEWPNAITIDYTNDLLYWADAHLGYIEFSDLEGHHRHTVYDGSLPHPFALTIFEDTVFWTDWNTRTVEKGNKYDGSGRVVLVNTTHKPFDIHVYHPYRQPIMSNPCGTNNGGCSHLCLIKAGGRGFTCACPDDFQTVQLRDRTLCMPMCSSTQFLCGNNEKCIPIWWKCDGQKDCSDGSDEPDLCPHRFCRLGQFQCRDGNCTSPQALCNARQDCADGSDEDRVLCEHHRCESNEWQCANKRCIPQSWQCDSVNDCLDNSDEDTSHCASRTCRPGQFKCNNGRCIPQSWKCDVDNDCGDYSDEPIDECTTAAYNCDNHTEFSCKTNYRCIPQWAVCNGFDDCRDNSDEQGCESVPCHPSGDFRCANHHCIPLRWKCDGTDDCGDNSDEENCVPRECSESEFRCADQQCIPSRWVCDQENDCGDNSDERDCEMKTCHPEHFQCTSGHCVPKALACDGRADCLDASDESACPTRFPNGTYCPAAMFECKNHVCIQSFWICDGENDCVDGSDEEIHLCFNIPCESPQRFRCDNSRCVYGHQLCNGVDDCGDGSDEKEEHCRKPTHKPCTDTEYKCSNGNCISQHYVCDNVNDCGDLSDETGCNLGDNRTCAENICEQNCTQLSSGGFICSCRPGFKPSTSDKNSCQDINECEEFGICPQSCRNSKGSYECFCVDGFKSMSTHYGERCAADGSPPLLLLPENVRIRKYNTSSEKFSEYLEEEEHIQTIDYDWDPEHIGLSVVYYTVLAQGSQFGAIKRAYIPNFESGSNNPIREVDLGLKYLMQPDGLAVDWVGRHIYWSDAKSQRIEVATLDGRYRKWLITTQLDQPAAIAVNPKLGLMFWTDQGKQPKIESAWMNGEHRSVLVSENLGWPNGLSIDYLNDDRVYWSDSKEDVIEAIKYDGTDRRLIINEAMKPFSLDIFEDKLYWVAKEKGEVWRQNKFGKENKEKVLVVNPWLTQVRIFHQLRYNQSVSNPCKQVCSHLCLLRPGGYSCACPQGSDFVTGSTVQCDAASELPVTMPPPCRCMHGGNCYFDENELPKCKCSSGYSGEYCEVGLSRGIPPGTTMAVLLTFVIVIIVGALVLVGLFHYRKTGSLLPTLPKLPSLSSLAKPSENGNGVTFRSGADVNMDIGVSPFGPETIIDRSMAMNEHFVMEVGKQPVIFENPMYAAKDNTSKVALAVQGPSTGAQVTVPENVENQNYGRPIDPSEIVPEPKPASPGADEIQGKKWNIFKRKPKQTTNFENPIYAEMDSEVKDAVAVAPPPSPSLPAKASKRNLTPGYTATEDTFKDTANLVKEDSDV</sequence>